<proteinExistence type="evidence at protein level"/>
<keyword id="KW-0002">3D-structure</keyword>
<keyword id="KW-0004">4Fe-4S</keyword>
<keyword id="KW-0025">Alternative splicing</keyword>
<keyword id="KW-0067">ATP-binding</keyword>
<keyword id="KW-0898">Cataract</keyword>
<keyword id="KW-0159">Chromosome partition</keyword>
<keyword id="KW-0172">Cockayne syndrome</keyword>
<keyword id="KW-0963">Cytoplasm</keyword>
<keyword id="KW-0206">Cytoskeleton</keyword>
<keyword id="KW-0209">Deafness</keyword>
<keyword id="KW-0225">Disease variant</keyword>
<keyword id="KW-0227">DNA damage</keyword>
<keyword id="KW-0234">DNA repair</keyword>
<keyword id="KW-0238">DNA-binding</keyword>
<keyword id="KW-0242">Dwarfism</keyword>
<keyword id="KW-0347">Helicase</keyword>
<keyword id="KW-0945">Host-virus interaction</keyword>
<keyword id="KW-0378">Hydrolase</keyword>
<keyword id="KW-0977">Ichthyosis</keyword>
<keyword id="KW-0408">Iron</keyword>
<keyword id="KW-0411">Iron-sulfur</keyword>
<keyword id="KW-0413">Isomerase</keyword>
<keyword id="KW-0460">Magnesium</keyword>
<keyword id="KW-0479">Metal-binding</keyword>
<keyword id="KW-0547">Nucleotide-binding</keyword>
<keyword id="KW-0539">Nucleus</keyword>
<keyword id="KW-1267">Proteomics identification</keyword>
<keyword id="KW-1185">Reference proteome</keyword>
<keyword id="KW-0804">Transcription</keyword>
<keyword id="KW-0805">Transcription regulation</keyword>
<keyword id="KW-0832">Ubl conjugation</keyword>
<keyword id="KW-0857">Xeroderma pigmentosum</keyword>
<comment type="function">
    <text evidence="3 13 14 16 18 22 23 29 35">ATP-dependent 5'-3' DNA helicase (PubMed:31253769, PubMed:8413672, PubMed:9771713). Component of the general transcription and DNA repair factor IIH (TFIIH) core complex, not absolutely essential for minimal transcription in vitro (PubMed:10024882, PubMed:17466626, PubMed:9771713). Required for transcription-coupled nucleotide excision repair (NER) of damaged DNA; recognizes damaged bases (PubMed:17466626, PubMed:23352696, PubMed:9771713). Sequestered in chromatin on UV-damaged DNA (PubMed:23352696). When complexed to CDK-activating kinase (CAK), involved in transcription by RNA polymerase II. In NER, TFIIH acts by opening DNA around the lesion to allow the excision of the damaged oligonucleotide and its replacement by a new DNA fragment. The ATP-dependent helicase activity of XPD/ERCC2 is required for DNA opening. Involved in DNA lesion verification (PubMed:31253769). In transcription, TFIIH has an essential role in transcription initiation. When the pre-initiation complex (PIC) has been established, TFIIH is required for promoter opening and promoter escape. Phosphorylation of the C-terminal tail (CTD) of the largest subunit of RNA polymerase II by the kinase module CAK controls the initiation of transcription. XPD/ERCC2 acts by forming a bridge between CAK and the core-TFIIH complex. The structure of the TFIIH transcription complex differs from the NER-TFIIH complex; large movements by XPD/ERCC2 and XPB/ERCC3 are stabilized by XPA which allow this subunit to contact ssDNA (PubMed:31253769, PubMed:33902107). Involved in the regulation of vitamin-D receptor activity. As part of the mitotic spindle-associated MMXD complex it plays a role in chromosome segregation. Might have a role in aging process and could play a causative role in the generation of skin cancers.</text>
</comment>
<comment type="catalytic activity">
    <reaction evidence="22 29">
        <text>Couples ATP hydrolysis with the unwinding of duplex DNA at the replication fork by translocating in the 5'-3' direction. This creates two antiparallel DNA single strands (ssDNA). The leading ssDNA polymer is the template for DNA polymerase III holoenzyme which synthesizes a continuous strand.</text>
        <dbReference type="EC" id="5.6.2.3"/>
    </reaction>
</comment>
<comment type="catalytic activity">
    <reaction evidence="29 35">
        <text>ATP + H2O = ADP + phosphate + H(+)</text>
        <dbReference type="Rhea" id="RHEA:13065"/>
        <dbReference type="ChEBI" id="CHEBI:15377"/>
        <dbReference type="ChEBI" id="CHEBI:15378"/>
        <dbReference type="ChEBI" id="CHEBI:30616"/>
        <dbReference type="ChEBI" id="CHEBI:43474"/>
        <dbReference type="ChEBI" id="CHEBI:456216"/>
        <dbReference type="EC" id="5.6.2.3"/>
    </reaction>
</comment>
<comment type="cofactor">
    <cofactor evidence="17 29">
        <name>Mg(2+)</name>
        <dbReference type="ChEBI" id="CHEBI:18420"/>
    </cofactor>
</comment>
<comment type="cofactor">
    <cofactor evidence="17 22">
        <name>[4Fe-4S] cluster</name>
        <dbReference type="ChEBI" id="CHEBI:49883"/>
    </cofactor>
    <text evidence="17 22">Binds 1 [4Fe-4S] cluster.</text>
</comment>
<comment type="activity regulation">
    <text evidence="22 35">Interaction with GTF2H2 (p44) results in stimulation of the 5'-3' helicase activity of this subunit (PubMed:9771713). DNA unwinding by this subunit in TFIIH is stimulated 4-fold by XPA and 20-fold by ERCC5/XPG (PubMed:31253769).</text>
</comment>
<comment type="biophysicochemical properties">
    <kinetics>
        <KM evidence="29">200 uM for ATP</KM>
    </kinetics>
    <phDependence>
        <text evidence="29">Optimum pH is 6.5 for both helicase and DNA-stimulated ATPase activity.</text>
    </phDependence>
</comment>
<comment type="subunit">
    <text evidence="3 15 16 19 20 21 35 36">Component of the 7-subunit TFIIH core complex composed of XPB/ERCC3, XPD/ERCC2, GTF2H1, GTF2H2, GTF2H3, GTF2H4 and GTF2H5, which is active in NER (PubMed:9771713, PubMed:9852112). The core complex associates with the 3-subunit CDK-activating kinase (CAK) module composed of CCNH/cyclin H, CDK7 and MNAT1 to form the 10-subunit holoenzyme (holo-TFIIH) active in transcription (PubMed:9771713, PubMed:9852112). Interacts with GTF2H2 (p44) which stimulates the 5'-3' helicase activity of this subunit (PubMed:9771713). Component of the MMXD complex, which includes CIAO1, ERCC2, CIAO2B, MMS19 and SLC25A5 (PubMed:20797633). Interacts with CIAO1 and CIAO2B; the interaction WITH CIAO2B is direct (PubMed:23891004). Interacts with ATF7IP (PubMed:19106100). Interacts directly with MMS19 (PubMed:23585563). Part of TBP-based Pol II pre-initiation complex (PIC), in which Pol II core assembles with general transcription factors and other specific initiation factors including GTF2E1, GTF2E2, GTF2F1, GTF2F2, TCEA1, ERCC2, ERCC3, GTF2H2, GTF2H3, GTF2H4, GTF2H5, GTF2A1, GTF2A2, GTF2B and TBP; this large multi-subunit PIC complex mediates DNA unwinding and targets Pol II core to the transcription start site where the first phosphodiester bond forms.</text>
</comment>
<comment type="subunit">
    <text evidence="25">(Microbial infection) Interacts with Epstein-Barr virus EBNA2.</text>
</comment>
<comment type="interaction">
    <interactant intactId="EBI-6380590">
        <id>P18074</id>
    </interactant>
    <interactant intactId="EBI-725145">
        <id>O76071</id>
        <label>CIAO1</label>
    </interactant>
    <organismsDiffer>false</organismsDiffer>
    <experiments>2</experiments>
</comment>
<comment type="interaction">
    <interactant intactId="EBI-6380590">
        <id>P18074</id>
    </interactant>
    <interactant intactId="EBI-744045">
        <id>Q9Y3D0</id>
        <label>CIAO2B</label>
    </interactant>
    <organismsDiffer>false</organismsDiffer>
    <experiments>2</experiments>
</comment>
<comment type="interaction">
    <interactant intactId="EBI-6380590">
        <id>P18074</id>
    </interactant>
    <interactant intactId="EBI-1183307">
        <id>P19447</id>
        <label>ERCC3</label>
    </interactant>
    <organismsDiffer>false</organismsDiffer>
    <experiments>5</experiments>
</comment>
<comment type="interaction">
    <interactant intactId="EBI-6380590">
        <id>P18074</id>
    </interactant>
    <interactant intactId="EBI-1565170">
        <id>Q13888</id>
        <label>GTF2H2</label>
    </interactant>
    <organismsDiffer>false</organismsDiffer>
    <experiments>9</experiments>
</comment>
<comment type="interaction">
    <interactant intactId="EBI-6380590">
        <id>P18074</id>
    </interactant>
    <interactant intactId="EBI-8469755">
        <id>Q6P1K8</id>
        <label>GTF2H2C_2</label>
    </interactant>
    <organismsDiffer>false</organismsDiffer>
    <experiments>3</experiments>
</comment>
<comment type="interaction">
    <interactant intactId="EBI-6380590">
        <id>P18074</id>
    </interactant>
    <interactant intactId="EBI-1044169">
        <id>Q96T76</id>
        <label>MMS19</label>
    </interactant>
    <organismsDiffer>false</organismsDiffer>
    <experiments>9</experiments>
</comment>
<comment type="subcellular location">
    <subcellularLocation>
        <location evidence="16 18 19">Nucleus</location>
    </subcellularLocation>
    <subcellularLocation>
        <location evidence="16">Cytoplasm</location>
        <location evidence="16">Cytoskeleton</location>
        <location evidence="16">Spindle</location>
    </subcellularLocation>
</comment>
<comment type="alternative products">
    <event type="alternative splicing"/>
    <isoform>
        <id>P18074-1</id>
        <name>1</name>
        <sequence type="displayed"/>
    </isoform>
    <isoform>
        <id>P18074-2</id>
        <name>2</name>
        <sequence type="described" ref="VSP_043132 VSP_043133 VSP_043134"/>
    </isoform>
</comment>
<comment type="domain">
    <text evidence="35">Interacts with GTF2H2/p44 via the C-terminus of this protein; mutations in the C-terminal region of XPD do not alter its helicase activity, but prevent its interaction with and helicase stimulation by GTF2H2/p44 (PubMed:9771713).</text>
</comment>
<comment type="PTM">
    <text evidence="41">ISGylated.</text>
</comment>
<comment type="disease" evidence="4 5 11 13 14 24 26 27 31 33">
    <disease id="DI-01158">
        <name>Xeroderma pigmentosum complementation group D</name>
        <acronym>XP-D</acronym>
        <description>An autosomal recessive pigmentary skin disorder characterized by solar hypersensitivity of the skin, high predisposition for developing cancers on areas exposed to sunlight and, in some cases, neurological abnormalities. The skin develops marked freckling and other pigmentation abnormalities. Some XP-D patients present features of Cockayne syndrome, including cachectic dwarfism, pigmentary retinopathy, ataxia, decreased nerve conduction velocities. The phenotype combining xeroderma pigmentosum and Cockayne syndrome traits is referred to as XP-CS complex.</description>
        <dbReference type="MIM" id="278730"/>
    </disease>
    <text>The disease is caused by variants affecting the gene represented in this entry.</text>
</comment>
<comment type="disease" evidence="5 6 14 28 30 32 33 34 35">
    <disease id="DI-01104">
        <name>Trichothiodystrophy 1, photosensitive</name>
        <acronym>TTD1</acronym>
        <description>A form of trichothiodystrophy, an autosomal recessive disease characterized by sulfur-deficient brittle hair and multisystem variable abnormalities. The spectrum of clinical features varies from mild disease with only hair involvement to severe disease with cutaneous, neurologic and profound developmental defects. Ichthyosis, intellectual and developmental disabilities, decreased fertility, abnormal characteristics at birth, ocular abnormalities, short stature, and infections are common manifestations. There are both photosensitive and non-photosensitive forms of the disorder. TTD1 patients manifest cutaneous photosensitivity.</description>
        <dbReference type="MIM" id="601675"/>
    </disease>
    <text>The disease is caused by variants affecting the gene represented in this entry.</text>
</comment>
<comment type="disease" evidence="9">
    <disease id="DI-00259">
        <name>Cerebro-oculo-facio-skeletal syndrome 2</name>
        <acronym>COFS2</acronym>
        <description>A disorder of prenatal onset characterized by microcephaly, congenital cataracts, facial dysmorphism, neurogenic arthrogryposis, growth failure and severe psychomotor retardation. COFS is considered to be part of the nucleotide-excision repair disorders spectrum that include also xeroderma pigmentosum, trichothiodystrophy and Cockayne syndrome.</description>
        <dbReference type="MIM" id="610756"/>
    </disease>
    <text>The disease is caused by variants affecting the gene represented in this entry.</text>
</comment>
<comment type="similarity">
    <text evidence="40">Belongs to the helicase family. RAD3/XPD subfamily.</text>
</comment>
<comment type="sequence caution" evidence="40">
    <conflict type="erroneous gene model prediction">
        <sequence resource="EMBL-CDS" id="AAM45142"/>
    </conflict>
</comment>
<comment type="online information" name="Atlas of Genetics and Cytogenetics in Oncology and Haematology">
    <link uri="https://atlasgeneticsoncology.org/gene/297/XPD"/>
</comment>
<dbReference type="EC" id="5.6.2.3" evidence="22 29 35"/>
<dbReference type="EMBL" id="X52221">
    <property type="protein sequence ID" value="CAA36463.1"/>
    <property type="molecule type" value="mRNA"/>
</dbReference>
<dbReference type="EMBL" id="X52222">
    <property type="protein sequence ID" value="CAA36464.1"/>
    <property type="molecule type" value="mRNA"/>
</dbReference>
<dbReference type="EMBL" id="L47234">
    <property type="protein sequence ID" value="AAL48323.1"/>
    <property type="molecule type" value="Genomic_DNA"/>
</dbReference>
<dbReference type="EMBL" id="AY092780">
    <property type="protein sequence ID" value="AAM45142.1"/>
    <property type="status" value="ALT_SEQ"/>
    <property type="molecule type" value="Genomic_DNA"/>
</dbReference>
<dbReference type="EMBL" id="BT006883">
    <property type="protein sequence ID" value="AAP35529.1"/>
    <property type="molecule type" value="mRNA"/>
</dbReference>
<dbReference type="EMBL" id="CH471126">
    <property type="protein sequence ID" value="EAW57341.1"/>
    <property type="molecule type" value="Genomic_DNA"/>
</dbReference>
<dbReference type="EMBL" id="BC108255">
    <property type="protein sequence ID" value="AAI08256.1"/>
    <property type="molecule type" value="mRNA"/>
</dbReference>
<dbReference type="EMBL" id="BC110523">
    <property type="protein sequence ID" value="AAI10524.1"/>
    <property type="molecule type" value="mRNA"/>
</dbReference>
<dbReference type="CCDS" id="CCDS33049.1">
    <molecule id="P18074-1"/>
</dbReference>
<dbReference type="CCDS" id="CCDS46112.1">
    <molecule id="P18074-2"/>
</dbReference>
<dbReference type="PIR" id="S10888">
    <property type="entry name" value="S10888"/>
</dbReference>
<dbReference type="RefSeq" id="NP_000391.1">
    <molecule id="P18074-1"/>
    <property type="nucleotide sequence ID" value="NM_000400.4"/>
</dbReference>
<dbReference type="RefSeq" id="NP_001124339.1">
    <molecule id="P18074-2"/>
    <property type="nucleotide sequence ID" value="NM_001130867.2"/>
</dbReference>
<dbReference type="PDB" id="5IVW">
    <property type="method" value="EM"/>
    <property type="resolution" value="10.00 A"/>
    <property type="chains" value="W=1-760"/>
</dbReference>
<dbReference type="PDB" id="5IY6">
    <property type="method" value="EM"/>
    <property type="resolution" value="7.20 A"/>
    <property type="chains" value="W=1-760"/>
</dbReference>
<dbReference type="PDB" id="5IY7">
    <property type="method" value="EM"/>
    <property type="resolution" value="8.60 A"/>
    <property type="chains" value="W=1-760"/>
</dbReference>
<dbReference type="PDB" id="5IY8">
    <property type="method" value="EM"/>
    <property type="resolution" value="7.90 A"/>
    <property type="chains" value="W=1-760"/>
</dbReference>
<dbReference type="PDB" id="5IY9">
    <property type="method" value="EM"/>
    <property type="resolution" value="6.30 A"/>
    <property type="chains" value="W=1-760"/>
</dbReference>
<dbReference type="PDB" id="5OF4">
    <property type="method" value="EM"/>
    <property type="resolution" value="4.40 A"/>
    <property type="chains" value="B=1-760"/>
</dbReference>
<dbReference type="PDB" id="6NMI">
    <property type="method" value="EM"/>
    <property type="resolution" value="3.70 A"/>
    <property type="chains" value="B=1-760"/>
</dbReference>
<dbReference type="PDB" id="6O9L">
    <property type="method" value="EM"/>
    <property type="resolution" value="7.20 A"/>
    <property type="chains" value="0=1-760"/>
</dbReference>
<dbReference type="PDB" id="6O9M">
    <property type="method" value="EM"/>
    <property type="resolution" value="4.40 A"/>
    <property type="chains" value="0=1-760"/>
</dbReference>
<dbReference type="PDB" id="6RO4">
    <property type="method" value="EM"/>
    <property type="resolution" value="3.50 A"/>
    <property type="chains" value="B=1-760"/>
</dbReference>
<dbReference type="PDB" id="6TUN">
    <property type="method" value="X-ray"/>
    <property type="resolution" value="2.07 A"/>
    <property type="chains" value="A/B=245-439"/>
</dbReference>
<dbReference type="PDB" id="7AD8">
    <property type="method" value="EM"/>
    <property type="resolution" value="3.50 A"/>
    <property type="chains" value="B=1-760"/>
</dbReference>
<dbReference type="PDB" id="7EGB">
    <property type="method" value="EM"/>
    <property type="resolution" value="3.30 A"/>
    <property type="chains" value="7=1-760"/>
</dbReference>
<dbReference type="PDB" id="7EGC">
    <property type="method" value="EM"/>
    <property type="resolution" value="3.90 A"/>
    <property type="chains" value="7=1-760"/>
</dbReference>
<dbReference type="PDB" id="7ENA">
    <property type="method" value="EM"/>
    <property type="resolution" value="4.07 A"/>
    <property type="chains" value="7=1-760"/>
</dbReference>
<dbReference type="PDB" id="7ENC">
    <property type="method" value="EM"/>
    <property type="resolution" value="4.13 A"/>
    <property type="chains" value="7=1-760"/>
</dbReference>
<dbReference type="PDB" id="7LBM">
    <property type="method" value="EM"/>
    <property type="resolution" value="4.80 A"/>
    <property type="chains" value="X=1-760"/>
</dbReference>
<dbReference type="PDB" id="7NVR">
    <property type="method" value="EM"/>
    <property type="resolution" value="4.50 A"/>
    <property type="chains" value="0=1-760"/>
</dbReference>
<dbReference type="PDB" id="7NVW">
    <property type="method" value="EM"/>
    <property type="resolution" value="4.30 A"/>
    <property type="chains" value="0=1-760"/>
</dbReference>
<dbReference type="PDB" id="7NVX">
    <property type="method" value="EM"/>
    <property type="resolution" value="3.90 A"/>
    <property type="chains" value="0=1-760"/>
</dbReference>
<dbReference type="PDB" id="7NVY">
    <property type="method" value="EM"/>
    <property type="resolution" value="7.30 A"/>
    <property type="chains" value="0=1-760"/>
</dbReference>
<dbReference type="PDB" id="7NVZ">
    <property type="method" value="EM"/>
    <property type="resolution" value="7.20 A"/>
    <property type="chains" value="0=1-760"/>
</dbReference>
<dbReference type="PDB" id="7NW0">
    <property type="method" value="EM"/>
    <property type="resolution" value="6.60 A"/>
    <property type="chains" value="0=1-760"/>
</dbReference>
<dbReference type="PDB" id="8BVW">
    <property type="method" value="EM"/>
    <property type="resolution" value="4.00 A"/>
    <property type="chains" value="1=1-760"/>
</dbReference>
<dbReference type="PDB" id="8BYQ">
    <property type="method" value="EM"/>
    <property type="resolution" value="4.10 A"/>
    <property type="chains" value="1=1-760"/>
</dbReference>
<dbReference type="PDB" id="8EBS">
    <property type="method" value="EM"/>
    <property type="resolution" value="4.00 A"/>
    <property type="chains" value="B=1-760"/>
</dbReference>
<dbReference type="PDB" id="8EBT">
    <property type="method" value="EM"/>
    <property type="resolution" value="3.90 A"/>
    <property type="chains" value="B=1-730"/>
</dbReference>
<dbReference type="PDB" id="8EBU">
    <property type="method" value="EM"/>
    <property type="resolution" value="3.30 A"/>
    <property type="chains" value="B=1-760"/>
</dbReference>
<dbReference type="PDB" id="8EBV">
    <property type="method" value="EM"/>
    <property type="resolution" value="7.10 A"/>
    <property type="chains" value="B=1-760"/>
</dbReference>
<dbReference type="PDB" id="8EBW">
    <property type="method" value="EM"/>
    <property type="resolution" value="5.60 A"/>
    <property type="chains" value="B=1-760"/>
</dbReference>
<dbReference type="PDB" id="8EBX">
    <property type="method" value="EM"/>
    <property type="resolution" value="3.60 A"/>
    <property type="chains" value="B=1-760"/>
</dbReference>
<dbReference type="PDB" id="8EBY">
    <property type="method" value="EM"/>
    <property type="resolution" value="3.60 A"/>
    <property type="chains" value="B=1-760"/>
</dbReference>
<dbReference type="PDB" id="8GXQ">
    <property type="method" value="EM"/>
    <property type="resolution" value="5.04 A"/>
    <property type="chains" value="HA=1-760"/>
</dbReference>
<dbReference type="PDB" id="8GXS">
    <property type="method" value="EM"/>
    <property type="resolution" value="4.16 A"/>
    <property type="chains" value="HA=1-760"/>
</dbReference>
<dbReference type="PDB" id="8WAK">
    <property type="method" value="EM"/>
    <property type="resolution" value="5.47 A"/>
    <property type="chains" value="7=1-760"/>
</dbReference>
<dbReference type="PDB" id="8WAL">
    <property type="method" value="EM"/>
    <property type="resolution" value="8.52 A"/>
    <property type="chains" value="7=1-760"/>
</dbReference>
<dbReference type="PDB" id="8WAN">
    <property type="method" value="EM"/>
    <property type="resolution" value="6.07 A"/>
    <property type="chains" value="7=1-760"/>
</dbReference>
<dbReference type="PDB" id="8WAO">
    <property type="method" value="EM"/>
    <property type="resolution" value="6.40 A"/>
    <property type="chains" value="7=1-760"/>
</dbReference>
<dbReference type="PDB" id="8WAP">
    <property type="method" value="EM"/>
    <property type="resolution" value="5.85 A"/>
    <property type="chains" value="7=1-760"/>
</dbReference>
<dbReference type="PDB" id="8WAQ">
    <property type="method" value="EM"/>
    <property type="resolution" value="6.29 A"/>
    <property type="chains" value="7=1-760"/>
</dbReference>
<dbReference type="PDB" id="8WAR">
    <property type="method" value="EM"/>
    <property type="resolution" value="7.20 A"/>
    <property type="chains" value="7=1-760"/>
</dbReference>
<dbReference type="PDB" id="8WAS">
    <property type="method" value="EM"/>
    <property type="resolution" value="6.13 A"/>
    <property type="chains" value="7=1-760"/>
</dbReference>
<dbReference type="PDBsum" id="5IVW"/>
<dbReference type="PDBsum" id="5IY6"/>
<dbReference type="PDBsum" id="5IY7"/>
<dbReference type="PDBsum" id="5IY8"/>
<dbReference type="PDBsum" id="5IY9"/>
<dbReference type="PDBsum" id="5OF4"/>
<dbReference type="PDBsum" id="6NMI"/>
<dbReference type="PDBsum" id="6O9L"/>
<dbReference type="PDBsum" id="6O9M"/>
<dbReference type="PDBsum" id="6RO4"/>
<dbReference type="PDBsum" id="6TUN"/>
<dbReference type="PDBsum" id="7AD8"/>
<dbReference type="PDBsum" id="7EGB"/>
<dbReference type="PDBsum" id="7EGC"/>
<dbReference type="PDBsum" id="7ENA"/>
<dbReference type="PDBsum" id="7ENC"/>
<dbReference type="PDBsum" id="7LBM"/>
<dbReference type="PDBsum" id="7NVR"/>
<dbReference type="PDBsum" id="7NVW"/>
<dbReference type="PDBsum" id="7NVX"/>
<dbReference type="PDBsum" id="7NVY"/>
<dbReference type="PDBsum" id="7NVZ"/>
<dbReference type="PDBsum" id="7NW0"/>
<dbReference type="PDBsum" id="8BVW"/>
<dbReference type="PDBsum" id="8BYQ"/>
<dbReference type="PDBsum" id="8EBS"/>
<dbReference type="PDBsum" id="8EBT"/>
<dbReference type="PDBsum" id="8EBU"/>
<dbReference type="PDBsum" id="8EBV"/>
<dbReference type="PDBsum" id="8EBW"/>
<dbReference type="PDBsum" id="8EBX"/>
<dbReference type="PDBsum" id="8EBY"/>
<dbReference type="PDBsum" id="8GXQ"/>
<dbReference type="PDBsum" id="8GXS"/>
<dbReference type="PDBsum" id="8WAK"/>
<dbReference type="PDBsum" id="8WAL"/>
<dbReference type="PDBsum" id="8WAN"/>
<dbReference type="PDBsum" id="8WAO"/>
<dbReference type="PDBsum" id="8WAP"/>
<dbReference type="PDBsum" id="8WAQ"/>
<dbReference type="PDBsum" id="8WAR"/>
<dbReference type="PDBsum" id="8WAS"/>
<dbReference type="EMDB" id="EMD-0452"/>
<dbReference type="EMDB" id="EMD-12610"/>
<dbReference type="EMDB" id="EMD-12615"/>
<dbReference type="EMDB" id="EMD-12616"/>
<dbReference type="EMDB" id="EMD-12617"/>
<dbReference type="EMDB" id="EMD-12618"/>
<dbReference type="EMDB" id="EMD-12619"/>
<dbReference type="EMDB" id="EMD-16274"/>
<dbReference type="EMDB" id="EMD-16331"/>
<dbReference type="EMDB" id="EMD-23255"/>
<dbReference type="EMDB" id="EMD-27996"/>
<dbReference type="EMDB" id="EMD-27997"/>
<dbReference type="EMDB" id="EMD-27998"/>
<dbReference type="EMDB" id="EMD-27999"/>
<dbReference type="EMDB" id="EMD-28000"/>
<dbReference type="EMDB" id="EMD-28001"/>
<dbReference type="EMDB" id="EMD-28002"/>
<dbReference type="EMDB" id="EMD-31111"/>
<dbReference type="EMDB" id="EMD-31112"/>
<dbReference type="EMDB" id="EMD-31204"/>
<dbReference type="EMDB" id="EMD-31207"/>
<dbReference type="EMDB" id="EMD-34359"/>
<dbReference type="EMDB" id="EMD-34360"/>
<dbReference type="EMDB" id="EMD-37395"/>
<dbReference type="EMDB" id="EMD-37396"/>
<dbReference type="EMDB" id="EMD-37398"/>
<dbReference type="EMDB" id="EMD-37399"/>
<dbReference type="EMDB" id="EMD-37400"/>
<dbReference type="EMDB" id="EMD-37401"/>
<dbReference type="EMDB" id="EMD-37402"/>
<dbReference type="EMDB" id="EMD-37403"/>
<dbReference type="EMDB" id="EMD-3802"/>
<dbReference type="EMDB" id="EMD-4970"/>
<dbReference type="EMDB" id="EMD-8131"/>
<dbReference type="EMDB" id="EMD-8132"/>
<dbReference type="EMDB" id="EMD-8133"/>
<dbReference type="EMDB" id="EMD-8134"/>
<dbReference type="SMR" id="P18074"/>
<dbReference type="BioGRID" id="108380">
    <property type="interactions" value="98"/>
</dbReference>
<dbReference type="ComplexPortal" id="CPX-2395">
    <property type="entry name" value="General transcription factor TFIIH complex"/>
</dbReference>
<dbReference type="CORUM" id="P18074"/>
<dbReference type="DIP" id="DIP-644N"/>
<dbReference type="FunCoup" id="P18074">
    <property type="interactions" value="2204"/>
</dbReference>
<dbReference type="IntAct" id="P18074">
    <property type="interactions" value="62"/>
</dbReference>
<dbReference type="MINT" id="P18074"/>
<dbReference type="STRING" id="9606.ENSP00000375809"/>
<dbReference type="ChEMBL" id="CHEMBL4105743"/>
<dbReference type="DrugCentral" id="P18074"/>
<dbReference type="iPTMnet" id="P18074"/>
<dbReference type="PhosphoSitePlus" id="P18074"/>
<dbReference type="BioMuta" id="ERCC2"/>
<dbReference type="DMDM" id="119540"/>
<dbReference type="jPOST" id="P18074"/>
<dbReference type="MassIVE" id="P18074"/>
<dbReference type="PaxDb" id="9606-ENSP00000375809"/>
<dbReference type="PeptideAtlas" id="P18074"/>
<dbReference type="ProteomicsDB" id="53542">
    <molecule id="P18074-1"/>
</dbReference>
<dbReference type="ProteomicsDB" id="53543">
    <molecule id="P18074-2"/>
</dbReference>
<dbReference type="Pumba" id="P18074"/>
<dbReference type="Antibodypedia" id="17895">
    <property type="antibodies" value="291 antibodies from 37 providers"/>
</dbReference>
<dbReference type="CPTC" id="P18074">
    <property type="antibodies" value="1 antibody"/>
</dbReference>
<dbReference type="DNASU" id="2068"/>
<dbReference type="Ensembl" id="ENST00000391945.10">
    <molecule id="P18074-1"/>
    <property type="protein sequence ID" value="ENSP00000375809.4"/>
    <property type="gene ID" value="ENSG00000104884.17"/>
</dbReference>
<dbReference type="Ensembl" id="ENST00000485403.6">
    <molecule id="P18074-2"/>
    <property type="protein sequence ID" value="ENSP00000431229.2"/>
    <property type="gene ID" value="ENSG00000104884.17"/>
</dbReference>
<dbReference type="Ensembl" id="ENST00000682414.1">
    <molecule id="P18074-1"/>
    <property type="protein sequence ID" value="ENSP00000507019.1"/>
    <property type="gene ID" value="ENSG00000104884.17"/>
</dbReference>
<dbReference type="GeneID" id="2068"/>
<dbReference type="KEGG" id="hsa:2068"/>
<dbReference type="MANE-Select" id="ENST00000391945.10">
    <property type="protein sequence ID" value="ENSP00000375809.4"/>
    <property type="RefSeq nucleotide sequence ID" value="NM_000400.4"/>
    <property type="RefSeq protein sequence ID" value="NP_000391.1"/>
</dbReference>
<dbReference type="UCSC" id="uc002pbj.3">
    <molecule id="P18074-1"/>
    <property type="organism name" value="human"/>
</dbReference>
<dbReference type="AGR" id="HGNC:3434"/>
<dbReference type="CTD" id="2068"/>
<dbReference type="DisGeNET" id="2068"/>
<dbReference type="GeneCards" id="ERCC2"/>
<dbReference type="GeneReviews" id="ERCC2"/>
<dbReference type="HGNC" id="HGNC:3434">
    <property type="gene designation" value="ERCC2"/>
</dbReference>
<dbReference type="HPA" id="ENSG00000104884">
    <property type="expression patterns" value="Low tissue specificity"/>
</dbReference>
<dbReference type="MalaCards" id="ERCC2"/>
<dbReference type="MIM" id="126340">
    <property type="type" value="gene"/>
</dbReference>
<dbReference type="MIM" id="278730">
    <property type="type" value="phenotype"/>
</dbReference>
<dbReference type="MIM" id="601675">
    <property type="type" value="phenotype"/>
</dbReference>
<dbReference type="MIM" id="610756">
    <property type="type" value="phenotype"/>
</dbReference>
<dbReference type="neXtProt" id="NX_P18074"/>
<dbReference type="OpenTargets" id="ENSG00000104884"/>
<dbReference type="Orphanet" id="1466">
    <property type="disease" value="COFS syndrome"/>
</dbReference>
<dbReference type="Orphanet" id="33364">
    <property type="disease" value="Trichothiodystrophy"/>
</dbReference>
<dbReference type="Orphanet" id="910">
    <property type="disease" value="Xeroderma pigmentosum"/>
</dbReference>
<dbReference type="Orphanet" id="220295">
    <property type="disease" value="Xeroderma pigmentosum-Cockayne syndrome complex"/>
</dbReference>
<dbReference type="PharmGKB" id="PA27848"/>
<dbReference type="VEuPathDB" id="HostDB:ENSG00000104884"/>
<dbReference type="eggNOG" id="KOG1131">
    <property type="taxonomic scope" value="Eukaryota"/>
</dbReference>
<dbReference type="GeneTree" id="ENSGT00950000182970"/>
<dbReference type="HOGENOM" id="CLU_045429_0_0_1"/>
<dbReference type="InParanoid" id="P18074"/>
<dbReference type="OMA" id="WQTMGIL"/>
<dbReference type="OrthoDB" id="272481at2759"/>
<dbReference type="PAN-GO" id="P18074">
    <property type="GO annotations" value="7 GO annotations based on evolutionary models"/>
</dbReference>
<dbReference type="PhylomeDB" id="P18074"/>
<dbReference type="TreeFam" id="TF101232"/>
<dbReference type="BRENDA" id="3.6.4.12">
    <property type="organism ID" value="2681"/>
</dbReference>
<dbReference type="PathwayCommons" id="P18074"/>
<dbReference type="Reactome" id="R-HSA-112382">
    <property type="pathway name" value="Formation of RNA Pol II elongation complex"/>
</dbReference>
<dbReference type="Reactome" id="R-HSA-113418">
    <property type="pathway name" value="Formation of the Early Elongation Complex"/>
</dbReference>
<dbReference type="Reactome" id="R-HSA-167152">
    <property type="pathway name" value="Formation of HIV elongation complex in the absence of HIV Tat"/>
</dbReference>
<dbReference type="Reactome" id="R-HSA-167158">
    <property type="pathway name" value="Formation of the HIV-1 Early Elongation Complex"/>
</dbReference>
<dbReference type="Reactome" id="R-HSA-167160">
    <property type="pathway name" value="RNA Pol II CTD phosphorylation and interaction with CE during HIV infection"/>
</dbReference>
<dbReference type="Reactome" id="R-HSA-167161">
    <property type="pathway name" value="HIV Transcription Initiation"/>
</dbReference>
<dbReference type="Reactome" id="R-HSA-167162">
    <property type="pathway name" value="RNA Polymerase II HIV Promoter Escape"/>
</dbReference>
<dbReference type="Reactome" id="R-HSA-167172">
    <property type="pathway name" value="Transcription of the HIV genome"/>
</dbReference>
<dbReference type="Reactome" id="R-HSA-167200">
    <property type="pathway name" value="Formation of HIV-1 elongation complex containing HIV-1 Tat"/>
</dbReference>
<dbReference type="Reactome" id="R-HSA-167246">
    <property type="pathway name" value="Tat-mediated elongation of the HIV-1 transcript"/>
</dbReference>
<dbReference type="Reactome" id="R-HSA-2564830">
    <property type="pathway name" value="Cytosolic iron-sulfur cluster assembly"/>
</dbReference>
<dbReference type="Reactome" id="R-HSA-427413">
    <property type="pathway name" value="NoRC negatively regulates rRNA expression"/>
</dbReference>
<dbReference type="Reactome" id="R-HSA-5696395">
    <property type="pathway name" value="Formation of Incision Complex in GG-NER"/>
</dbReference>
<dbReference type="Reactome" id="R-HSA-5696400">
    <property type="pathway name" value="Dual Incision in GG-NER"/>
</dbReference>
<dbReference type="Reactome" id="R-HSA-674695">
    <property type="pathway name" value="RNA Polymerase II Pre-transcription Events"/>
</dbReference>
<dbReference type="Reactome" id="R-HSA-6781823">
    <property type="pathway name" value="Formation of TC-NER Pre-Incision Complex"/>
</dbReference>
<dbReference type="Reactome" id="R-HSA-6781827">
    <property type="pathway name" value="Transcription-Coupled Nucleotide Excision Repair (TC-NER)"/>
</dbReference>
<dbReference type="Reactome" id="R-HSA-6782135">
    <property type="pathway name" value="Dual incision in TC-NER"/>
</dbReference>
<dbReference type="Reactome" id="R-HSA-6782210">
    <property type="pathway name" value="Gap-filling DNA repair synthesis and ligation in TC-NER"/>
</dbReference>
<dbReference type="Reactome" id="R-HSA-6796648">
    <property type="pathway name" value="TP53 Regulates Transcription of DNA Repair Genes"/>
</dbReference>
<dbReference type="Reactome" id="R-HSA-72086">
    <property type="pathway name" value="mRNA Capping"/>
</dbReference>
<dbReference type="Reactome" id="R-HSA-73762">
    <property type="pathway name" value="RNA Polymerase I Transcription Initiation"/>
</dbReference>
<dbReference type="Reactome" id="R-HSA-73772">
    <property type="pathway name" value="RNA Polymerase I Promoter Escape"/>
</dbReference>
<dbReference type="Reactome" id="R-HSA-73776">
    <property type="pathway name" value="RNA Polymerase II Promoter Escape"/>
</dbReference>
<dbReference type="Reactome" id="R-HSA-73779">
    <property type="pathway name" value="RNA Polymerase II Transcription Pre-Initiation And Promoter Opening"/>
</dbReference>
<dbReference type="Reactome" id="R-HSA-73863">
    <property type="pathway name" value="RNA Polymerase I Transcription Termination"/>
</dbReference>
<dbReference type="Reactome" id="R-HSA-75953">
    <property type="pathway name" value="RNA Polymerase II Transcription Initiation"/>
</dbReference>
<dbReference type="Reactome" id="R-HSA-75955">
    <property type="pathway name" value="RNA Polymerase II Transcription Elongation"/>
</dbReference>
<dbReference type="Reactome" id="R-HSA-76042">
    <property type="pathway name" value="RNA Polymerase II Transcription Initiation And Promoter Clearance"/>
</dbReference>
<dbReference type="Reactome" id="R-HSA-77075">
    <property type="pathway name" value="RNA Pol II CTD phosphorylation and interaction with CE"/>
</dbReference>
<dbReference type="SignaLink" id="P18074"/>
<dbReference type="SIGNOR" id="P18074"/>
<dbReference type="BioGRID-ORCS" id="2068">
    <property type="hits" value="765 hits in 1179 CRISPR screens"/>
</dbReference>
<dbReference type="CD-CODE" id="91857CE7">
    <property type="entry name" value="Nucleolus"/>
</dbReference>
<dbReference type="ChiTaRS" id="ERCC2">
    <property type="organism name" value="human"/>
</dbReference>
<dbReference type="EvolutionaryTrace" id="P18074"/>
<dbReference type="GeneWiki" id="ERCC2"/>
<dbReference type="GenomeRNAi" id="2068"/>
<dbReference type="Pharos" id="P18074">
    <property type="development level" value="Tchem"/>
</dbReference>
<dbReference type="PRO" id="PR:P18074"/>
<dbReference type="Proteomes" id="UP000005640">
    <property type="component" value="Chromosome 19"/>
</dbReference>
<dbReference type="RNAct" id="P18074">
    <property type="molecule type" value="protein"/>
</dbReference>
<dbReference type="Bgee" id="ENSG00000104884">
    <property type="expression patterns" value="Expressed in stromal cell of endometrium and 112 other cell types or tissues"/>
</dbReference>
<dbReference type="ExpressionAtlas" id="P18074">
    <property type="expression patterns" value="baseline and differential"/>
</dbReference>
<dbReference type="GO" id="GO:0070516">
    <property type="term" value="C:CAK-ERCC2 complex"/>
    <property type="evidence" value="ECO:0000314"/>
    <property type="project" value="UniProtKB"/>
</dbReference>
<dbReference type="GO" id="GO:0005737">
    <property type="term" value="C:cytoplasm"/>
    <property type="evidence" value="ECO:0000314"/>
    <property type="project" value="UniProtKB"/>
</dbReference>
<dbReference type="GO" id="GO:0005829">
    <property type="term" value="C:cytosol"/>
    <property type="evidence" value="ECO:0000314"/>
    <property type="project" value="HPA"/>
</dbReference>
<dbReference type="GO" id="GO:0071817">
    <property type="term" value="C:MMXD complex"/>
    <property type="evidence" value="ECO:0000314"/>
    <property type="project" value="UniProtKB"/>
</dbReference>
<dbReference type="GO" id="GO:0005654">
    <property type="term" value="C:nucleoplasm"/>
    <property type="evidence" value="ECO:0000314"/>
    <property type="project" value="HPA"/>
</dbReference>
<dbReference type="GO" id="GO:0005634">
    <property type="term" value="C:nucleus"/>
    <property type="evidence" value="ECO:0000314"/>
    <property type="project" value="UniProtKB"/>
</dbReference>
<dbReference type="GO" id="GO:0005819">
    <property type="term" value="C:spindle"/>
    <property type="evidence" value="ECO:0000314"/>
    <property type="project" value="UniProtKB"/>
</dbReference>
<dbReference type="GO" id="GO:0005669">
    <property type="term" value="C:transcription factor TFIID complex"/>
    <property type="evidence" value="ECO:0000314"/>
    <property type="project" value="UniProtKB"/>
</dbReference>
<dbReference type="GO" id="GO:0000439">
    <property type="term" value="C:transcription factor TFIIH core complex"/>
    <property type="evidence" value="ECO:0000314"/>
    <property type="project" value="UniProtKB"/>
</dbReference>
<dbReference type="GO" id="GO:0005675">
    <property type="term" value="C:transcription factor TFIIH holo complex"/>
    <property type="evidence" value="ECO:0000314"/>
    <property type="project" value="UniProtKB"/>
</dbReference>
<dbReference type="GO" id="GO:0051539">
    <property type="term" value="F:4 iron, 4 sulfur cluster binding"/>
    <property type="evidence" value="ECO:0007669"/>
    <property type="project" value="UniProtKB-KW"/>
</dbReference>
<dbReference type="GO" id="GO:0043139">
    <property type="term" value="F:5'-3' DNA helicase activity"/>
    <property type="evidence" value="ECO:0000314"/>
    <property type="project" value="UniProtKB"/>
</dbReference>
<dbReference type="GO" id="GO:0005524">
    <property type="term" value="F:ATP binding"/>
    <property type="evidence" value="ECO:0007669"/>
    <property type="project" value="UniProtKB-KW"/>
</dbReference>
<dbReference type="GO" id="GO:0016887">
    <property type="term" value="F:ATP hydrolysis activity"/>
    <property type="evidence" value="ECO:0007669"/>
    <property type="project" value="RHEA"/>
</dbReference>
<dbReference type="GO" id="GO:0003684">
    <property type="term" value="F:damaged DNA binding"/>
    <property type="evidence" value="ECO:0000318"/>
    <property type="project" value="GO_Central"/>
</dbReference>
<dbReference type="GO" id="GO:0003678">
    <property type="term" value="F:DNA helicase activity"/>
    <property type="evidence" value="ECO:0000318"/>
    <property type="project" value="GO_Central"/>
</dbReference>
<dbReference type="GO" id="GO:0046872">
    <property type="term" value="F:metal ion binding"/>
    <property type="evidence" value="ECO:0007669"/>
    <property type="project" value="UniProtKB-KW"/>
</dbReference>
<dbReference type="GO" id="GO:0030674">
    <property type="term" value="F:protein-macromolecule adaptor activity"/>
    <property type="evidence" value="ECO:0000353"/>
    <property type="project" value="UniProtKB"/>
</dbReference>
<dbReference type="GO" id="GO:0006915">
    <property type="term" value="P:apoptotic process"/>
    <property type="evidence" value="ECO:0000315"/>
    <property type="project" value="UniProtKB"/>
</dbReference>
<dbReference type="GO" id="GO:0030282">
    <property type="term" value="P:bone mineralization"/>
    <property type="evidence" value="ECO:0007669"/>
    <property type="project" value="Ensembl"/>
</dbReference>
<dbReference type="GO" id="GO:0032289">
    <property type="term" value="P:central nervous system myelin formation"/>
    <property type="evidence" value="ECO:0007669"/>
    <property type="project" value="Ensembl"/>
</dbReference>
<dbReference type="GO" id="GO:0007059">
    <property type="term" value="P:chromosome segregation"/>
    <property type="evidence" value="ECO:0000315"/>
    <property type="project" value="UniProtKB"/>
</dbReference>
<dbReference type="GO" id="GO:0008340">
    <property type="term" value="P:determination of adult lifespan"/>
    <property type="evidence" value="ECO:0007669"/>
    <property type="project" value="Ensembl"/>
</dbReference>
<dbReference type="GO" id="GO:0040016">
    <property type="term" value="P:embryonic cleavage"/>
    <property type="evidence" value="ECO:0007669"/>
    <property type="project" value="Ensembl"/>
</dbReference>
<dbReference type="GO" id="GO:0048568">
    <property type="term" value="P:embryonic organ development"/>
    <property type="evidence" value="ECO:0007669"/>
    <property type="project" value="Ensembl"/>
</dbReference>
<dbReference type="GO" id="GO:0043249">
    <property type="term" value="P:erythrocyte maturation"/>
    <property type="evidence" value="ECO:0007669"/>
    <property type="project" value="Ensembl"/>
</dbReference>
<dbReference type="GO" id="GO:0030198">
    <property type="term" value="P:extracellular matrix organization"/>
    <property type="evidence" value="ECO:0007669"/>
    <property type="project" value="Ensembl"/>
</dbReference>
<dbReference type="GO" id="GO:0035315">
    <property type="term" value="P:hair cell differentiation"/>
    <property type="evidence" value="ECO:0000315"/>
    <property type="project" value="UniProtKB"/>
</dbReference>
<dbReference type="GO" id="GO:0048820">
    <property type="term" value="P:hair follicle maturation"/>
    <property type="evidence" value="ECO:0007669"/>
    <property type="project" value="Ensembl"/>
</dbReference>
<dbReference type="GO" id="GO:0060218">
    <property type="term" value="P:hematopoietic stem cell differentiation"/>
    <property type="evidence" value="ECO:0007669"/>
    <property type="project" value="Ensembl"/>
</dbReference>
<dbReference type="GO" id="GO:0071425">
    <property type="term" value="P:hematopoietic stem cell proliferation"/>
    <property type="evidence" value="ECO:0007669"/>
    <property type="project" value="Ensembl"/>
</dbReference>
<dbReference type="GO" id="GO:0001701">
    <property type="term" value="P:in utero embryonic development"/>
    <property type="evidence" value="ECO:0007669"/>
    <property type="project" value="Ensembl"/>
</dbReference>
<dbReference type="GO" id="GO:0048009">
    <property type="term" value="P:insulin-like growth factor receptor signaling pathway"/>
    <property type="evidence" value="ECO:0007669"/>
    <property type="project" value="Ensembl"/>
</dbReference>
<dbReference type="GO" id="GO:0072332">
    <property type="term" value="P:intrinsic apoptotic signaling pathway by p53 class mediator"/>
    <property type="evidence" value="ECO:0007669"/>
    <property type="project" value="Ensembl"/>
</dbReference>
<dbReference type="GO" id="GO:0000462">
    <property type="term" value="P:maturation of SSU-rRNA from tricistronic rRNA transcript (SSU-rRNA, 5.8S rRNA, LSU-rRNA)"/>
    <property type="evidence" value="ECO:0007669"/>
    <property type="project" value="Ensembl"/>
</dbReference>
<dbReference type="GO" id="GO:0035264">
    <property type="term" value="P:multicellular organism growth"/>
    <property type="evidence" value="ECO:0007669"/>
    <property type="project" value="Ensembl"/>
</dbReference>
<dbReference type="GO" id="GO:0006289">
    <property type="term" value="P:nucleotide-excision repair"/>
    <property type="evidence" value="ECO:0000315"/>
    <property type="project" value="UniProtKB"/>
</dbReference>
<dbReference type="GO" id="GO:0045951">
    <property type="term" value="P:positive regulation of mitotic recombination"/>
    <property type="evidence" value="ECO:0000318"/>
    <property type="project" value="GO_Central"/>
</dbReference>
<dbReference type="GO" id="GO:0009791">
    <property type="term" value="P:post-embryonic development"/>
    <property type="evidence" value="ECO:0007669"/>
    <property type="project" value="Ensembl"/>
</dbReference>
<dbReference type="GO" id="GO:1901990">
    <property type="term" value="P:regulation of mitotic cell cycle phase transition"/>
    <property type="evidence" value="ECO:0000315"/>
    <property type="project" value="UniProtKB"/>
</dbReference>
<dbReference type="GO" id="GO:0006357">
    <property type="term" value="P:regulation of transcription by RNA polymerase II"/>
    <property type="evidence" value="ECO:0000314"/>
    <property type="project" value="UniProtKB"/>
</dbReference>
<dbReference type="GO" id="GO:0001666">
    <property type="term" value="P:response to hypoxia"/>
    <property type="evidence" value="ECO:0007669"/>
    <property type="project" value="Ensembl"/>
</dbReference>
<dbReference type="GO" id="GO:0006979">
    <property type="term" value="P:response to oxidative stress"/>
    <property type="evidence" value="ECO:0000315"/>
    <property type="project" value="UniProtKB"/>
</dbReference>
<dbReference type="GO" id="GO:0021510">
    <property type="term" value="P:spinal cord development"/>
    <property type="evidence" value="ECO:0007669"/>
    <property type="project" value="Ensembl"/>
</dbReference>
<dbReference type="GO" id="GO:0006366">
    <property type="term" value="P:transcription by RNA polymerase II"/>
    <property type="evidence" value="ECO:0000314"/>
    <property type="project" value="UniProtKB"/>
</dbReference>
<dbReference type="GO" id="GO:0006362">
    <property type="term" value="P:transcription elongation by RNA polymerase I"/>
    <property type="evidence" value="ECO:0007669"/>
    <property type="project" value="Ensembl"/>
</dbReference>
<dbReference type="GO" id="GO:0006367">
    <property type="term" value="P:transcription initiation at RNA polymerase II promoter"/>
    <property type="evidence" value="ECO:0000314"/>
    <property type="project" value="UniProtKB"/>
</dbReference>
<dbReference type="GO" id="GO:0006283">
    <property type="term" value="P:transcription-coupled nucleotide-excision repair"/>
    <property type="evidence" value="ECO:0000314"/>
    <property type="project" value="UniProtKB"/>
</dbReference>
<dbReference type="GO" id="GO:0009650">
    <property type="term" value="P:UV protection"/>
    <property type="evidence" value="ECO:0007669"/>
    <property type="project" value="Ensembl"/>
</dbReference>
<dbReference type="CDD" id="cd17969">
    <property type="entry name" value="DEAHc_XPD"/>
    <property type="match status" value="1"/>
</dbReference>
<dbReference type="CDD" id="cd18788">
    <property type="entry name" value="SF2_C_XPD"/>
    <property type="match status" value="1"/>
</dbReference>
<dbReference type="FunFam" id="3.40.50.300:FF:000135">
    <property type="entry name" value="DNA repair helicase RAD3, putative"/>
    <property type="match status" value="1"/>
</dbReference>
<dbReference type="FunFam" id="3.40.50.300:FF:000128">
    <property type="entry name" value="Putative DNA repair helicase RAD3"/>
    <property type="match status" value="1"/>
</dbReference>
<dbReference type="FunFam" id="3.40.50.300:FF:000381">
    <property type="entry name" value="TFIIH basal transcription factor complex helicase subunit"/>
    <property type="match status" value="1"/>
</dbReference>
<dbReference type="Gene3D" id="3.40.50.300">
    <property type="entry name" value="P-loop containing nucleotide triphosphate hydrolases"/>
    <property type="match status" value="2"/>
</dbReference>
<dbReference type="InterPro" id="IPR006555">
    <property type="entry name" value="ATP-dep_Helicase_C"/>
</dbReference>
<dbReference type="InterPro" id="IPR045028">
    <property type="entry name" value="DinG/Rad3-like"/>
</dbReference>
<dbReference type="InterPro" id="IPR002464">
    <property type="entry name" value="DNA/RNA_helicase_DEAH_CS"/>
</dbReference>
<dbReference type="InterPro" id="IPR010643">
    <property type="entry name" value="HBB"/>
</dbReference>
<dbReference type="InterPro" id="IPR014013">
    <property type="entry name" value="Helic_SF1/SF2_ATP-bd_DinG/Rad3"/>
</dbReference>
<dbReference type="InterPro" id="IPR006554">
    <property type="entry name" value="Helicase-like_DEXD_c2"/>
</dbReference>
<dbReference type="InterPro" id="IPR027417">
    <property type="entry name" value="P-loop_NTPase"/>
</dbReference>
<dbReference type="InterPro" id="IPR010614">
    <property type="entry name" value="RAD3-like_helicase_DEAD"/>
</dbReference>
<dbReference type="InterPro" id="IPR013020">
    <property type="entry name" value="Rad3/Chl1-like"/>
</dbReference>
<dbReference type="InterPro" id="IPR001945">
    <property type="entry name" value="RAD3/XPD"/>
</dbReference>
<dbReference type="NCBIfam" id="TIGR00604">
    <property type="entry name" value="rad3"/>
    <property type="match status" value="1"/>
</dbReference>
<dbReference type="PANTHER" id="PTHR11472">
    <property type="entry name" value="DNA REPAIR DEAD HELICASE RAD3/XP-D SUBFAMILY MEMBER"/>
    <property type="match status" value="1"/>
</dbReference>
<dbReference type="PANTHER" id="PTHR11472:SF1">
    <property type="entry name" value="GENERAL TRANSCRIPTION AND DNA REPAIR FACTOR IIH HELICASE SUBUNIT XPD"/>
    <property type="match status" value="1"/>
</dbReference>
<dbReference type="Pfam" id="PF06733">
    <property type="entry name" value="DEAD_2"/>
    <property type="match status" value="1"/>
</dbReference>
<dbReference type="Pfam" id="PF06777">
    <property type="entry name" value="HBB"/>
    <property type="match status" value="1"/>
</dbReference>
<dbReference type="Pfam" id="PF13307">
    <property type="entry name" value="Helicase_C_2"/>
    <property type="match status" value="1"/>
</dbReference>
<dbReference type="PRINTS" id="PR00852">
    <property type="entry name" value="XRODRMPGMNTD"/>
</dbReference>
<dbReference type="SMART" id="SM00488">
    <property type="entry name" value="DEXDc2"/>
    <property type="match status" value="1"/>
</dbReference>
<dbReference type="SMART" id="SM00491">
    <property type="entry name" value="HELICc2"/>
    <property type="match status" value="1"/>
</dbReference>
<dbReference type="SUPFAM" id="SSF52540">
    <property type="entry name" value="P-loop containing nucleoside triphosphate hydrolases"/>
    <property type="match status" value="1"/>
</dbReference>
<dbReference type="PROSITE" id="PS00690">
    <property type="entry name" value="DEAH_ATP_HELICASE"/>
    <property type="match status" value="1"/>
</dbReference>
<dbReference type="PROSITE" id="PS51193">
    <property type="entry name" value="HELICASE_ATP_BIND_2"/>
    <property type="match status" value="1"/>
</dbReference>
<sequence>MKLNVDGLLVYFPYDYIYPEQFSYMRELKRTLDAKGHGVLEMPSGTGKTVSLLALIMAYQRAYPLEVTKLIYCSRTVPEIEKVIEELRKLLNFYEKQEGEKLPFLGLALSSRKNLCIHPEVTPLRFGKDVDGKCHSLTASYVRAQYQHDTSLPHCRFYEEFDAHGREVPLPAGIYNLDDLKALGRRQGWCPYFLARYSILHANVVVYSYHYLLDPKIADLVSKELARKAVVVFDEAHNIDNVCIDSMSVNLTRRTLDRCQGNLETLQKTVLRIKETDEQRLRDEYRRLVEGLREASAARETDAHLANPVLPDEVLQEAVPGSIRTAEHFLGFLRRLLEYVKWRLRVQHVVQESPPAFLSGLAQRVCIQRKPLRFCAERLRSLLHTLEITDLADFSPLTLLANFATLVSTYAKGFTIIIEPFDDRTPTIANPILHFSCMDASLAIKPVFERFQSVIITSGTLSPLDIYPKILDFHPVTMATFTMTLARVCLCPMIIGRGNDQVAISSKFETREDIAVIRNYGNLLLEMSAVVPDGIVAFFTSYQYMESTVASWYEQGILENIQRNKLLFIETQDGAETSVALEKYQEACENGRGAILLSVARGKVSEGIDFVHHYGRAVIMFGVPYVYTQSRILKARLEYLRDQFQIRENDFLTFDAMRHAAQCVGRAIRGKTDYGLMVFADKRFARGDKRGKLPRWIQEHLTDANLNLTVDEGVQVAKYFLRQMAQPFHREDQLGLSLLSLEQLESEETLKRIEQIAQQL</sequence>
<feature type="chain" id="PRO_0000101980" description="General transcription and DNA repair factor IIH helicase subunit XPD">
    <location>
        <begin position="1"/>
        <end position="760"/>
    </location>
</feature>
<feature type="domain" description="Helicase ATP-binding" evidence="2">
    <location>
        <begin position="7"/>
        <end position="283"/>
    </location>
</feature>
<feature type="region of interest" description="Mediates interaction with MMS19">
    <location>
        <begin position="438"/>
        <end position="637"/>
    </location>
</feature>
<feature type="short sequence motif" description="DEAH box">
    <location>
        <begin position="234"/>
        <end position="237"/>
    </location>
</feature>
<feature type="short sequence motif" description="Nuclear localization signal" evidence="1">
    <location>
        <begin position="682"/>
        <end position="695"/>
    </location>
</feature>
<feature type="binding site" evidence="2">
    <location>
        <begin position="42"/>
        <end position="49"/>
    </location>
    <ligand>
        <name>ATP</name>
        <dbReference type="ChEBI" id="CHEBI:30616"/>
    </ligand>
</feature>
<feature type="binding site" evidence="22 47">
    <location>
        <position position="116"/>
    </location>
    <ligand>
        <name>[4Fe-4S] cluster</name>
        <dbReference type="ChEBI" id="CHEBI:49883"/>
    </ligand>
</feature>
<feature type="binding site" evidence="22 47">
    <location>
        <position position="134"/>
    </location>
    <ligand>
        <name>[4Fe-4S] cluster</name>
        <dbReference type="ChEBI" id="CHEBI:49883"/>
    </ligand>
</feature>
<feature type="binding site" evidence="22 47">
    <location>
        <position position="155"/>
    </location>
    <ligand>
        <name>[4Fe-4S] cluster</name>
        <dbReference type="ChEBI" id="CHEBI:49883"/>
    </ligand>
</feature>
<feature type="binding site" evidence="22 47">
    <location>
        <position position="190"/>
    </location>
    <ligand>
        <name>[4Fe-4S] cluster</name>
        <dbReference type="ChEBI" id="CHEBI:49883"/>
    </ligand>
</feature>
<feature type="splice variant" id="VSP_043132" description="In isoform 2." evidence="39">
    <location>
        <begin position="1"/>
        <end position="24"/>
    </location>
</feature>
<feature type="splice variant" id="VSP_043133" description="In isoform 2." evidence="39">
    <original>FTIIIEPFDDRTPTIA</original>
    <variation>QAQHCGSSRNQKRSHP</variation>
    <location>
        <begin position="414"/>
        <end position="429"/>
    </location>
</feature>
<feature type="splice variant" id="VSP_043134" description="In isoform 2." evidence="39">
    <location>
        <begin position="430"/>
        <end position="760"/>
    </location>
</feature>
<feature type="sequence variant" id="VAR_008187" description="In XP-D; dbSNP:rs1360631927." evidence="33">
    <original>G</original>
    <variation>R</variation>
    <location>
        <position position="47"/>
    </location>
</feature>
<feature type="sequence variant" id="VAR_017282" description="In XP-D." evidence="5">
    <original>T</original>
    <variation>A</variation>
    <location>
        <position position="76"/>
    </location>
</feature>
<feature type="sequence variant" id="VAR_003622" description="In TTD1 and XP-D; dbSNP:rs121913020." evidence="11 28 34">
    <original>R</original>
    <variation>H</variation>
    <location>
        <position position="112"/>
    </location>
</feature>
<feature type="sequence variant" id="VAR_011412" description="In dbSNP:rs1799791.">
    <original>I</original>
    <variation>M</variation>
    <location>
        <position position="199"/>
    </location>
</feature>
<feature type="sequence variant" id="VAR_011413" description="In dbSNP:rs1799792.">
    <original>H</original>
    <variation>Y</variation>
    <location>
        <position position="201"/>
    </location>
</feature>
<feature type="sequence variant" id="VAR_008188" description="In XP-D; dbSNP:rs1340806384." evidence="33">
    <original>D</original>
    <variation>N</variation>
    <location>
        <position position="234"/>
    </location>
</feature>
<feature type="sequence variant" id="VAR_008189" description="In TTD1; dbSNP:rs370454709." evidence="34">
    <original>C</original>
    <variation>Y</variation>
    <location>
        <position position="259"/>
    </location>
</feature>
<feature type="sequence variant" id="VAR_011414" description="In dbSNP:rs1799793." evidence="7 10 11 37">
    <original>D</original>
    <variation>N</variation>
    <location>
        <position position="312"/>
    </location>
</feature>
<feature type="sequence variant" id="VAR_003623" description="In XP-D and TTD1; dbSNP:rs121913016." evidence="27 32 34">
    <original>L</original>
    <variation>V</variation>
    <location>
        <position position="461"/>
    </location>
</feature>
<feature type="sequence variant" id="VAR_008190" description="In TTD1." evidence="34">
    <location>
        <position position="482"/>
    </location>
</feature>
<feature type="sequence variant" id="VAR_017283" description="In XP-D; the corresponding mutation in fission yeast causes complete loss of activity; dbSNP:rs121913025." evidence="11">
    <original>L</original>
    <variation>P</variation>
    <location>
        <position position="485"/>
    </location>
</feature>
<feature type="sequence variant" id="VAR_017284" description="In TTD1." evidence="5">
    <original>R</original>
    <variation>G</variation>
    <location>
        <position position="487"/>
    </location>
</feature>
<feature type="sequence variant" id="VAR_003624" description="In TTD1; mild." evidence="28">
    <location>
        <begin position="488"/>
        <end position="493"/>
    </location>
</feature>
<feature type="sequence variant" id="VAR_017285" description="In XP-D; dbSNP:rs772572683." evidence="5">
    <original>R</original>
    <variation>Q</variation>
    <location>
        <position position="511"/>
    </location>
</feature>
<feature type="sequence variant" id="VAR_003625" description="In XP-D; mild; dbSNP:rs121913019." evidence="31">
    <original>S</original>
    <variation>R</variation>
    <location>
        <position position="541"/>
    </location>
</feature>
<feature type="sequence variant" id="VAR_008191" description="In XP-D." evidence="33">
    <original>Y</original>
    <variation>C</variation>
    <location>
        <position position="542"/>
    </location>
</feature>
<feature type="sequence variant" id="VAR_017286" description="In XP-D." evidence="11">
    <original>EK</original>
    <variation>VSE</variation>
    <location>
        <begin position="582"/>
        <end position="583"/>
    </location>
</feature>
<feature type="sequence variant" id="VAR_017287" description="In TTD1." evidence="5">
    <original>R</original>
    <variation>P</variation>
    <location>
        <position position="592"/>
    </location>
</feature>
<feature type="sequence variant" id="VAR_017288" description="In TTD1." evidence="5">
    <original>A</original>
    <variation>P</variation>
    <location>
        <position position="594"/>
    </location>
</feature>
<feature type="sequence variant" id="VAR_008192" description="In XP-D; dbSNP:rs140522180." evidence="5">
    <original>R</original>
    <variation>L</variation>
    <location>
        <position position="601"/>
    </location>
</feature>
<feature type="sequence variant" id="VAR_017289" description="In XP-D; dbSNP:rs753641926." evidence="5">
    <original>R</original>
    <variation>W</variation>
    <location>
        <position position="601"/>
    </location>
</feature>
<feature type="sequence variant" id="VAR_003627" description="In XP-D; combined with features of Cockayne syndrome; dbSNP:rs771824813." evidence="5">
    <original>G</original>
    <variation>D</variation>
    <location>
        <position position="602"/>
    </location>
</feature>
<feature type="sequence variant" id="VAR_011415" evidence="8">
    <original>R</original>
    <variation>C</variation>
    <location>
        <position position="616"/>
    </location>
</feature>
<feature type="sequence variant" id="VAR_003626" description="In XP-D and TTD1; dbSNP:rs376556895." evidence="28">
    <original>R</original>
    <variation>P</variation>
    <location>
        <position position="616"/>
    </location>
</feature>
<feature type="sequence variant" id="VAR_008193" description="In XP-D and COFS2; dbSNP:rs121913024." evidence="9">
    <original>R</original>
    <variation>W</variation>
    <location>
        <position position="616"/>
    </location>
</feature>
<feature type="sequence variant" id="VAR_008194" description="In TTD1; dbSNP:rs121913021." evidence="6 30">
    <original>R</original>
    <variation>C</variation>
    <location>
        <position position="658"/>
    </location>
</feature>
<feature type="sequence variant" id="VAR_017290" description="In TTD1." evidence="5">
    <original>R</original>
    <variation>G</variation>
    <location>
        <position position="658"/>
    </location>
</feature>
<feature type="sequence variant" id="VAR_008195" description="In TTD1 and XP-D; able to open damaged DNA and incise damaged DNA; dbSNP:rs762141272." evidence="14">
    <original>R</original>
    <variation>H</variation>
    <location>
        <position position="658"/>
    </location>
</feature>
<feature type="sequence variant" id="VAR_017291" description="In TTD1; dbSNP:rs770367713." evidence="5">
    <original>C</original>
    <variation>R</variation>
    <location>
        <position position="663"/>
    </location>
</feature>
<feature type="sequence variant" id="VAR_017292" description="In XP-D; dbSNP:rs752510317." evidence="5">
    <original>R</original>
    <variation>W</variation>
    <location>
        <position position="666"/>
    </location>
</feature>
<feature type="sequence variant" id="VAR_008196" description="In TTD1." evidence="34">
    <original>D</original>
    <variation>G</variation>
    <location>
        <position position="673"/>
    </location>
</feature>
<feature type="sequence variant" id="VAR_003628" description="In XP-D/CS; severe form." evidence="26">
    <original>G</original>
    <variation>R</variation>
    <location>
        <position position="675"/>
    </location>
</feature>
<feature type="sequence variant" id="VAR_017293" description="In XP-D and COFS2; dbSNP:rs121913023." evidence="9">
    <original>D</original>
    <variation>N</variation>
    <location>
        <position position="681"/>
    </location>
</feature>
<feature type="sequence variant" id="VAR_008197" description="In XP-D; dbSNP:rs758439420." evidence="33">
    <original>R</original>
    <variation>Q</variation>
    <location>
        <position position="683"/>
    </location>
</feature>
<feature type="sequence variant" id="VAR_008198" description="In XP-D; vitamin D-mediated activation of CYP24A1 is impaired in patient fibroblasts due to altered TFIIH-dependent phosphorylation of ETS1, subsequent impaired cooperation of ETS1 with VDR and altered VDR recruitment to CYP24A1 promoter; damaged DNA opening by TFIIH is impeded; dbSNP:rs41556519." evidence="13 14">
    <original>R</original>
    <variation>W</variation>
    <location>
        <position position="683"/>
    </location>
</feature>
<feature type="sequence variant" id="VAR_008199" description="In TTD1; dbSNP:rs121913022." evidence="6 30">
    <original>G</original>
    <variation>R</variation>
    <location>
        <position position="713"/>
    </location>
</feature>
<feature type="sequence variant" id="VAR_003629" description="In XP-D and TTD1; no longer interacts with GTF2H2/p44; has 5'-3' helicase activity." evidence="32 35">
    <location>
        <begin position="716"/>
        <end position="730"/>
    </location>
</feature>
<feature type="sequence variant" id="VAR_003630" description="In TTD1; no longer interacts with GTF2H2/p44; has 5'-3' helicase activity; dbSNP:rs121913026." evidence="14 28 34 35">
    <original>R</original>
    <variation>W</variation>
    <location>
        <position position="722"/>
    </location>
</feature>
<feature type="sequence variant" id="VAR_003631" description="In TTD1; dbSNP:rs121913018." evidence="32">
    <original>A</original>
    <variation>P</variation>
    <location>
        <position position="725"/>
    </location>
</feature>
<feature type="sequence variant" id="VAR_011416" description="In dbSNP:rs13181." evidence="7 10 11 12 37 38">
    <original>K</original>
    <variation>Q</variation>
    <location>
        <position position="751"/>
    </location>
</feature>
<feature type="mutagenesis site" description="Decreased transcriptional activity of the reconstituted TFIIH complex. Damaged DNA opening by TFIIH is impeded. Loss of TFIIH 5'-3' helicase activity, still binds GTF2H2. Does not restore nucleotide excision repair (NER) in deficient cells, does not bind UV damaged DNA." evidence="3 14 18 22 35">
    <original>K</original>
    <variation>R</variation>
    <location>
        <position position="48"/>
    </location>
</feature>
<feature type="mutagenesis site" description="Reduced iron-sulfur-binding. Iron-sulfur-binding is further decreased in absence of MMS19." evidence="17">
    <original>C</original>
    <variation>S</variation>
    <location>
        <position position="190"/>
    </location>
</feature>
<feature type="mutagenesis site" description="Does not restore nucleotide excision repair (NER) in deficient cells, does not bind UV damaged DNA, TFIIH is able to transcribe." evidence="18">
    <original>Y</original>
    <variation>A</variation>
    <location>
        <position position="192"/>
    </location>
</feature>
<feature type="mutagenesis site" description="Restores &lt;5% nucleotide excision repair (NER) in deficient cells, does not bind UV damaged DNA, TFIIH is able to transcribe." evidence="18">
    <original>R</original>
    <variation>E</variation>
    <location>
        <position position="196"/>
    </location>
</feature>
<feature type="mutagenesis site" description="No longer interacts with GTF2H2/p44, has 5'-3' helicase activity." evidence="35">
    <original>G</original>
    <variation>W</variation>
    <location>
        <position position="675"/>
    </location>
</feature>
<feature type="strand" evidence="57">
    <location>
        <begin position="2"/>
        <end position="5"/>
    </location>
</feature>
<feature type="strand" evidence="57">
    <location>
        <begin position="8"/>
        <end position="11"/>
    </location>
</feature>
<feature type="strand" evidence="57">
    <location>
        <begin position="13"/>
        <end position="15"/>
    </location>
</feature>
<feature type="helix" evidence="57">
    <location>
        <begin position="19"/>
        <end position="34"/>
    </location>
</feature>
<feature type="strand" evidence="57">
    <location>
        <begin position="38"/>
        <end position="41"/>
    </location>
</feature>
<feature type="helix" evidence="57">
    <location>
        <begin position="48"/>
        <end position="62"/>
    </location>
</feature>
<feature type="turn" evidence="57">
    <location>
        <begin position="64"/>
        <end position="66"/>
    </location>
</feature>
<feature type="strand" evidence="57">
    <location>
        <begin position="69"/>
        <end position="76"/>
    </location>
</feature>
<feature type="helix" evidence="57">
    <location>
        <begin position="77"/>
        <end position="98"/>
    </location>
</feature>
<feature type="strand" evidence="57">
    <location>
        <begin position="106"/>
        <end position="108"/>
    </location>
</feature>
<feature type="turn" evidence="57">
    <location>
        <begin position="112"/>
        <end position="114"/>
    </location>
</feature>
<feature type="turn" evidence="57">
    <location>
        <begin position="119"/>
        <end position="121"/>
    </location>
</feature>
<feature type="turn" evidence="57">
    <location>
        <begin position="127"/>
        <end position="129"/>
    </location>
</feature>
<feature type="helix" evidence="57">
    <location>
        <begin position="130"/>
        <end position="137"/>
    </location>
</feature>
<feature type="helix" evidence="57">
    <location>
        <begin position="140"/>
        <end position="146"/>
    </location>
</feature>
<feature type="turn" evidence="57">
    <location>
        <begin position="147"/>
        <end position="149"/>
    </location>
</feature>
<feature type="strand" evidence="56">
    <location>
        <begin position="151"/>
        <end position="153"/>
    </location>
</feature>
<feature type="helix" evidence="57">
    <location>
        <begin position="157"/>
        <end position="164"/>
    </location>
</feature>
<feature type="turn" evidence="57">
    <location>
        <begin position="165"/>
        <end position="167"/>
    </location>
</feature>
<feature type="helix" evidence="57">
    <location>
        <begin position="177"/>
        <end position="187"/>
    </location>
</feature>
<feature type="helix" evidence="57">
    <location>
        <begin position="191"/>
        <end position="198"/>
    </location>
</feature>
<feature type="strand" evidence="57">
    <location>
        <begin position="203"/>
        <end position="206"/>
    </location>
</feature>
<feature type="helix" evidence="57">
    <location>
        <begin position="210"/>
        <end position="213"/>
    </location>
</feature>
<feature type="helix" evidence="57">
    <location>
        <begin position="215"/>
        <end position="221"/>
    </location>
</feature>
<feature type="strand" evidence="57">
    <location>
        <begin position="222"/>
        <end position="225"/>
    </location>
</feature>
<feature type="strand" evidence="57">
    <location>
        <begin position="227"/>
        <end position="234"/>
    </location>
</feature>
<feature type="helix" evidence="57">
    <location>
        <begin position="239"/>
        <end position="246"/>
    </location>
</feature>
<feature type="strand" evidence="55">
    <location>
        <begin position="249"/>
        <end position="252"/>
    </location>
</feature>
<feature type="helix" evidence="55">
    <location>
        <begin position="253"/>
        <end position="276"/>
    </location>
</feature>
<feature type="helix" evidence="55">
    <location>
        <begin position="278"/>
        <end position="290"/>
    </location>
</feature>
<feature type="strand" evidence="55">
    <location>
        <begin position="323"/>
        <end position="325"/>
    </location>
</feature>
<feature type="helix" evidence="55">
    <location>
        <begin position="326"/>
        <end position="343"/>
    </location>
</feature>
<feature type="strand" evidence="55">
    <location>
        <begin position="350"/>
        <end position="352"/>
    </location>
</feature>
<feature type="helix" evidence="55">
    <location>
        <begin position="354"/>
        <end position="365"/>
    </location>
</feature>
<feature type="helix" evidence="55">
    <location>
        <begin position="369"/>
        <end position="373"/>
    </location>
</feature>
<feature type="helix" evidence="55">
    <location>
        <begin position="375"/>
        <end position="385"/>
    </location>
</feature>
<feature type="helix" evidence="55">
    <location>
        <begin position="392"/>
        <end position="394"/>
    </location>
</feature>
<feature type="helix" evidence="55">
    <location>
        <begin position="395"/>
        <end position="409"/>
    </location>
</feature>
<feature type="turn" evidence="55">
    <location>
        <begin position="410"/>
        <end position="412"/>
    </location>
</feature>
<feature type="strand" evidence="55">
    <location>
        <begin position="414"/>
        <end position="421"/>
    </location>
</feature>
<feature type="strand" evidence="57">
    <location>
        <begin position="427"/>
        <end position="429"/>
    </location>
</feature>
<feature type="strand" evidence="55">
    <location>
        <begin position="432"/>
        <end position="437"/>
    </location>
</feature>
<feature type="turn" evidence="57">
    <location>
        <begin position="440"/>
        <end position="444"/>
    </location>
</feature>
<feature type="helix" evidence="57">
    <location>
        <begin position="445"/>
        <end position="448"/>
    </location>
</feature>
<feature type="strand" evidence="57">
    <location>
        <begin position="455"/>
        <end position="459"/>
    </location>
</feature>
<feature type="turn" evidence="57">
    <location>
        <begin position="464"/>
        <end position="466"/>
    </location>
</feature>
<feature type="helix" evidence="57">
    <location>
        <begin position="467"/>
        <end position="470"/>
    </location>
</feature>
<feature type="strand" evidence="57">
    <location>
        <begin position="490"/>
        <end position="495"/>
    </location>
</feature>
<feature type="helix" evidence="57">
    <location>
        <begin position="508"/>
        <end position="510"/>
    </location>
</feature>
<feature type="helix" evidence="57">
    <location>
        <begin position="514"/>
        <end position="527"/>
    </location>
</feature>
<feature type="turn" evidence="57">
    <location>
        <begin position="528"/>
        <end position="530"/>
    </location>
</feature>
<feature type="strand" evidence="57">
    <location>
        <begin position="535"/>
        <end position="540"/>
    </location>
</feature>
<feature type="helix" evidence="57">
    <location>
        <begin position="542"/>
        <end position="554"/>
    </location>
</feature>
<feature type="turn" evidence="57">
    <location>
        <begin position="555"/>
        <end position="557"/>
    </location>
</feature>
<feature type="helix" evidence="57">
    <location>
        <begin position="558"/>
        <end position="562"/>
    </location>
</feature>
<feature type="strand" evidence="57">
    <location>
        <begin position="565"/>
        <end position="569"/>
    </location>
</feature>
<feature type="helix" evidence="57">
    <location>
        <begin position="574"/>
        <end position="589"/>
    </location>
</feature>
<feature type="strand" evidence="54">
    <location>
        <begin position="590"/>
        <end position="592"/>
    </location>
</feature>
<feature type="strand" evidence="57">
    <location>
        <begin position="594"/>
        <end position="599"/>
    </location>
</feature>
<feature type="helix" evidence="57">
    <location>
        <begin position="603"/>
        <end position="607"/>
    </location>
</feature>
<feature type="strand" evidence="57">
    <location>
        <begin position="616"/>
        <end position="622"/>
    </location>
</feature>
<feature type="turn" evidence="57">
    <location>
        <begin position="630"/>
        <end position="632"/>
    </location>
</feature>
<feature type="helix" evidence="57">
    <location>
        <begin position="633"/>
        <end position="643"/>
    </location>
</feature>
<feature type="helix" evidence="57">
    <location>
        <begin position="648"/>
        <end position="664"/>
    </location>
</feature>
<feature type="helix" evidence="57">
    <location>
        <begin position="665"/>
        <end position="667"/>
    </location>
</feature>
<feature type="strand" evidence="57">
    <location>
        <begin position="670"/>
        <end position="672"/>
    </location>
</feature>
<feature type="strand" evidence="57">
    <location>
        <begin position="675"/>
        <end position="680"/>
    </location>
</feature>
<feature type="helix" evidence="57">
    <location>
        <begin position="682"/>
        <end position="685"/>
    </location>
</feature>
<feature type="helix" evidence="57">
    <location>
        <begin position="687"/>
        <end position="690"/>
    </location>
</feature>
<feature type="helix" evidence="57">
    <location>
        <begin position="695"/>
        <end position="698"/>
    </location>
</feature>
<feature type="strand" evidence="57">
    <location>
        <begin position="705"/>
        <end position="708"/>
    </location>
</feature>
<feature type="helix" evidence="57">
    <location>
        <begin position="710"/>
        <end position="724"/>
    </location>
</feature>
<organism>
    <name type="scientific">Homo sapiens</name>
    <name type="common">Human</name>
    <dbReference type="NCBI Taxonomy" id="9606"/>
    <lineage>
        <taxon>Eukaryota</taxon>
        <taxon>Metazoa</taxon>
        <taxon>Chordata</taxon>
        <taxon>Craniata</taxon>
        <taxon>Vertebrata</taxon>
        <taxon>Euteleostomi</taxon>
        <taxon>Mammalia</taxon>
        <taxon>Eutheria</taxon>
        <taxon>Euarchontoglires</taxon>
        <taxon>Primates</taxon>
        <taxon>Haplorrhini</taxon>
        <taxon>Catarrhini</taxon>
        <taxon>Hominidae</taxon>
        <taxon>Homo</taxon>
    </lineage>
</organism>
<gene>
    <name type="primary">ERCC2</name>
    <name type="synonym">XPD</name>
    <name type="synonym">XPDC</name>
</gene>
<name>ERCC2_HUMAN</name>
<evidence type="ECO:0000255" key="1"/>
<evidence type="ECO:0000255" key="2">
    <source>
        <dbReference type="PROSITE-ProRule" id="PRU00541"/>
    </source>
</evidence>
<evidence type="ECO:0000269" key="3">
    <source>
    </source>
</evidence>
<evidence type="ECO:0000269" key="4">
    <source>
    </source>
</evidence>
<evidence type="ECO:0000269" key="5">
    <source>
    </source>
</evidence>
<evidence type="ECO:0000269" key="6">
    <source>
    </source>
</evidence>
<evidence type="ECO:0000269" key="7">
    <source>
    </source>
</evidence>
<evidence type="ECO:0000269" key="8">
    <source>
    </source>
</evidence>
<evidence type="ECO:0000269" key="9">
    <source>
    </source>
</evidence>
<evidence type="ECO:0000269" key="10">
    <source>
    </source>
</evidence>
<evidence type="ECO:0000269" key="11">
    <source>
    </source>
</evidence>
<evidence type="ECO:0000269" key="12">
    <source>
    </source>
</evidence>
<evidence type="ECO:0000269" key="13">
    <source>
    </source>
</evidence>
<evidence type="ECO:0000269" key="14">
    <source>
    </source>
</evidence>
<evidence type="ECO:0000269" key="15">
    <source>
    </source>
</evidence>
<evidence type="ECO:0000269" key="16">
    <source>
    </source>
</evidence>
<evidence type="ECO:0000269" key="17">
    <source>
    </source>
</evidence>
<evidence type="ECO:0000269" key="18">
    <source>
    </source>
</evidence>
<evidence type="ECO:0000269" key="19">
    <source>
    </source>
</evidence>
<evidence type="ECO:0000269" key="20">
    <source>
    </source>
</evidence>
<evidence type="ECO:0000269" key="21">
    <source>
    </source>
</evidence>
<evidence type="ECO:0000269" key="22">
    <source>
    </source>
</evidence>
<evidence type="ECO:0000269" key="23">
    <source>
    </source>
</evidence>
<evidence type="ECO:0000269" key="24">
    <source>
    </source>
</evidence>
<evidence type="ECO:0000269" key="25">
    <source>
    </source>
</evidence>
<evidence type="ECO:0000269" key="26">
    <source>
    </source>
</evidence>
<evidence type="ECO:0000269" key="27">
    <source>
    </source>
</evidence>
<evidence type="ECO:0000269" key="28">
    <source>
    </source>
</evidence>
<evidence type="ECO:0000269" key="29">
    <source>
    </source>
</evidence>
<evidence type="ECO:0000269" key="30">
    <source>
    </source>
</evidence>
<evidence type="ECO:0000269" key="31">
    <source>
    </source>
</evidence>
<evidence type="ECO:0000269" key="32">
    <source>
    </source>
</evidence>
<evidence type="ECO:0000269" key="33">
    <source>
    </source>
</evidence>
<evidence type="ECO:0000269" key="34">
    <source>
    </source>
</evidence>
<evidence type="ECO:0000269" key="35">
    <source>
    </source>
</evidence>
<evidence type="ECO:0000269" key="36">
    <source>
    </source>
</evidence>
<evidence type="ECO:0000269" key="37">
    <source ref="3"/>
</evidence>
<evidence type="ECO:0000269" key="38">
    <source ref="5"/>
</evidence>
<evidence type="ECO:0000303" key="39">
    <source ref="4"/>
</evidence>
<evidence type="ECO:0000305" key="40"/>
<evidence type="ECO:0000305" key="41">
    <source>
    </source>
</evidence>
<evidence type="ECO:0007744" key="42">
    <source>
        <dbReference type="PDB" id="5IVW"/>
    </source>
</evidence>
<evidence type="ECO:0007744" key="43">
    <source>
        <dbReference type="PDB" id="5IY6"/>
    </source>
</evidence>
<evidence type="ECO:0007744" key="44">
    <source>
        <dbReference type="PDB" id="5IY7"/>
    </source>
</evidence>
<evidence type="ECO:0007744" key="45">
    <source>
        <dbReference type="PDB" id="5IY8"/>
    </source>
</evidence>
<evidence type="ECO:0007744" key="46">
    <source>
        <dbReference type="PDB" id="5IY9"/>
    </source>
</evidence>
<evidence type="ECO:0007744" key="47">
    <source>
        <dbReference type="PDB" id="6RO4"/>
    </source>
</evidence>
<evidence type="ECO:0007744" key="48">
    <source>
        <dbReference type="PDB" id="7NVR"/>
    </source>
</evidence>
<evidence type="ECO:0007744" key="49">
    <source>
        <dbReference type="PDB" id="7NVW"/>
    </source>
</evidence>
<evidence type="ECO:0007744" key="50">
    <source>
        <dbReference type="PDB" id="7NVX"/>
    </source>
</evidence>
<evidence type="ECO:0007744" key="51">
    <source>
        <dbReference type="PDB" id="7NVY"/>
    </source>
</evidence>
<evidence type="ECO:0007744" key="52">
    <source>
        <dbReference type="PDB" id="7NVZ"/>
    </source>
</evidence>
<evidence type="ECO:0007744" key="53">
    <source>
        <dbReference type="PDB" id="7NW0"/>
    </source>
</evidence>
<evidence type="ECO:0007829" key="54">
    <source>
        <dbReference type="PDB" id="6RO4"/>
    </source>
</evidence>
<evidence type="ECO:0007829" key="55">
    <source>
        <dbReference type="PDB" id="6TUN"/>
    </source>
</evidence>
<evidence type="ECO:0007829" key="56">
    <source>
        <dbReference type="PDB" id="7AD8"/>
    </source>
</evidence>
<evidence type="ECO:0007829" key="57">
    <source>
        <dbReference type="PDB" id="8EBU"/>
    </source>
</evidence>
<protein>
    <recommendedName>
        <fullName>General transcription and DNA repair factor IIH helicase subunit XPD</fullName>
        <shortName>TFIIH subunit XPD</shortName>
        <ecNumber evidence="22 29 35">5.6.2.3</ecNumber>
    </recommendedName>
    <alternativeName>
        <fullName>Basic transcription factor 2 80 kDa subunit</fullName>
        <shortName>BTF2 p80</shortName>
    </alternativeName>
    <alternativeName>
        <fullName>CXPD</fullName>
    </alternativeName>
    <alternativeName>
        <fullName evidence="40">DNA 5'-3' helicase XPD</fullName>
    </alternativeName>
    <alternativeName>
        <fullName>DNA excision repair protein ERCC-2</fullName>
    </alternativeName>
    <alternativeName>
        <fullName>DNA repair protein complementing XP-D cells</fullName>
    </alternativeName>
    <alternativeName>
        <fullName>TFIIH basal transcription factor complex 80 kDa subunit</fullName>
        <shortName>TFIIH 80 kDa subunit</shortName>
        <shortName>TFIIH p80</shortName>
    </alternativeName>
    <alternativeName>
        <fullName>Xeroderma pigmentosum group D-complementing protein</fullName>
    </alternativeName>
</protein>
<reference key="1">
    <citation type="journal article" date="1990" name="EMBO J.">
        <title>ERCC2: cDNA cloning and molecular characterization of a human nucleotide excision repair gene with high homology to yeast RAD3.</title>
        <authorList>
            <person name="Weber C.A."/>
            <person name="Salazar E.P."/>
            <person name="Stewart S.A."/>
            <person name="Thompson L.H."/>
        </authorList>
    </citation>
    <scope>NUCLEOTIDE SEQUENCE [MRNA] (ISOFORM 1)</scope>
    <source>
        <tissue>Fibroblast</tissue>
    </source>
</reference>
<reference key="2">
    <citation type="journal article" date="1996" name="Genomics">
        <title>Sequence analysis of the ERCC2 gene regions in human, mouse, and hamster reveals three linked genes.</title>
        <authorList>
            <person name="Lamerdin J.E."/>
            <person name="Stilwagen S.A."/>
            <person name="Ramirez M.H."/>
            <person name="Stubbs L."/>
            <person name="Carrano A.V."/>
        </authorList>
    </citation>
    <scope>NUCLEOTIDE SEQUENCE [GENOMIC DNA]</scope>
    <source>
        <tissue>Fibroblast</tissue>
    </source>
</reference>
<reference key="3">
    <citation type="submission" date="2002-03" db="EMBL/GenBank/DDBJ databases">
        <authorList>
            <consortium name="NIEHS SNPs program"/>
        </authorList>
    </citation>
    <scope>NUCLEOTIDE SEQUENCE [GENOMIC DNA]</scope>
    <scope>VARIANTS ASN-312 AND GLN-751</scope>
</reference>
<reference key="4">
    <citation type="submission" date="2003-05" db="EMBL/GenBank/DDBJ databases">
        <title>Cloning of human full-length CDSs in BD Creator(TM) system donor vector.</title>
        <authorList>
            <person name="Kalnine N."/>
            <person name="Chen X."/>
            <person name="Rolfs A."/>
            <person name="Halleck A."/>
            <person name="Hines L."/>
            <person name="Eisenstein S."/>
            <person name="Koundinya M."/>
            <person name="Raphael J."/>
            <person name="Moreira D."/>
            <person name="Kelley T."/>
            <person name="LaBaer J."/>
            <person name="Lin Y."/>
            <person name="Phelan M."/>
            <person name="Farmer A."/>
        </authorList>
    </citation>
    <scope>NUCLEOTIDE SEQUENCE [LARGE SCALE MRNA] (ISOFORM 2)</scope>
</reference>
<reference key="5">
    <citation type="submission" date="2005-07" db="EMBL/GenBank/DDBJ databases">
        <authorList>
            <person name="Mural R.J."/>
            <person name="Istrail S."/>
            <person name="Sutton G.G."/>
            <person name="Florea L."/>
            <person name="Halpern A.L."/>
            <person name="Mobarry C.M."/>
            <person name="Lippert R."/>
            <person name="Walenz B."/>
            <person name="Shatkay H."/>
            <person name="Dew I."/>
            <person name="Miller J.R."/>
            <person name="Flanigan M.J."/>
            <person name="Edwards N.J."/>
            <person name="Bolanos R."/>
            <person name="Fasulo D."/>
            <person name="Halldorsson B.V."/>
            <person name="Hannenhalli S."/>
            <person name="Turner R."/>
            <person name="Yooseph S."/>
            <person name="Lu F."/>
            <person name="Nusskern D.R."/>
            <person name="Shue B.C."/>
            <person name="Zheng X.H."/>
            <person name="Zhong F."/>
            <person name="Delcher A.L."/>
            <person name="Huson D.H."/>
            <person name="Kravitz S.A."/>
            <person name="Mouchard L."/>
            <person name="Reinert K."/>
            <person name="Remington K.A."/>
            <person name="Clark A.G."/>
            <person name="Waterman M.S."/>
            <person name="Eichler E.E."/>
            <person name="Adams M.D."/>
            <person name="Hunkapiller M.W."/>
            <person name="Myers E.W."/>
            <person name="Venter J.C."/>
        </authorList>
    </citation>
    <scope>NUCLEOTIDE SEQUENCE [LARGE SCALE GENOMIC DNA]</scope>
    <scope>VARIANT GLN-751</scope>
</reference>
<reference key="6">
    <citation type="journal article" date="2004" name="Genome Res.">
        <title>The status, quality, and expansion of the NIH full-length cDNA project: the Mammalian Gene Collection (MGC).</title>
        <authorList>
            <consortium name="The MGC Project Team"/>
        </authorList>
    </citation>
    <scope>NUCLEOTIDE SEQUENCE [LARGE SCALE MRNA] (ISOFORM 1)</scope>
    <scope>VARIANT GLN-751</scope>
    <source>
        <tissue>Testis</tissue>
    </source>
</reference>
<reference key="7">
    <citation type="journal article" date="1992" name="Proc. Natl. Acad. Sci. U.S.A.">
        <title>Correction of Xeroderma pigmentosum complementation group D mutant cell phenotypes by chromosome and gene transfer: involvement of the human ERCC2 DNA repair gene.</title>
        <authorList>
            <person name="Fletjer W.L."/>
            <person name="McDaniel L.D."/>
            <person name="Johns D."/>
            <person name="Friedberg E.C."/>
            <person name="Schultz R.A."/>
        </authorList>
    </citation>
    <scope>CHARACTERIZATION</scope>
</reference>
<reference key="8">
    <citation type="journal article" date="1993" name="Nature">
        <title>Human Xeroderma pigmentosum group D gene encodes a DNA helicase.</title>
        <authorList>
            <person name="Sung P."/>
            <person name="Bailly V."/>
            <person name="Weber C.A."/>
            <person name="Thompson L.H."/>
            <person name="Prakash L."/>
            <person name="Prakash S."/>
        </authorList>
    </citation>
    <scope>FUNCTION AS A 5'-3' DNA HELICASE</scope>
    <scope>FUNCTION AS AN ATPASE</scope>
    <scope>COFACTOR</scope>
    <scope>BIOPHYSICOCHEMICAL PROPERTIES</scope>
</reference>
<reference key="9">
    <citation type="journal article" date="1995" name="Proc. Natl. Acad. Sci. U.S.A.">
        <title>The 62- and 80-kDa subunits of transcription factor IIH mediate the interaction with Epstein-Barr virus nuclear protein 2.</title>
        <authorList>
            <person name="Tong X."/>
            <person name="Drapkin R."/>
            <person name="Reinberg D."/>
            <person name="Kieff E."/>
        </authorList>
    </citation>
    <scope>INTERACTION WITH EBV EBNA2 (MICROBIAL INFECTION)</scope>
</reference>
<reference key="10">
    <citation type="journal article" date="1998" name="J. Biol. Chem.">
        <title>Immunoaffinity purification and functional characterization of human transcription factor IIH and RNA polymerase II from clonal cell lines that conditionally express epitope-tagged subunits of the multiprotein complexes.</title>
        <authorList>
            <person name="Kershnar E."/>
            <person name="Wu S.-Y."/>
            <person name="Chiang C.-M."/>
        </authorList>
    </citation>
    <scope>IDENTIFICATION IN THE TFIIH BASAL TRANSCRIPTION FACTOR</scope>
</reference>
<reference key="11">
    <citation type="journal article" date="1998" name="Nat. Genet.">
        <title>Mutations in the XPD helicase gene result in XP and TTD phenotypes, preventing interaction between XPD and the p44 subunit of TFIIH.</title>
        <authorList>
            <person name="Coin F."/>
            <person name="Marinoni J.-C."/>
            <person name="Rodolfo C."/>
            <person name="Fribourg S."/>
            <person name="Pedrini A.M."/>
            <person name="Egly J.-M."/>
        </authorList>
    </citation>
    <scope>FUNCTION AS A 5'-3' DNA HELICASE</scope>
    <scope>FUNCTION AS AN ATPASE</scope>
    <scope>CATALYTIC ACTIVITY</scope>
    <scope>ACTIVITY REGULATION</scope>
    <scope>SUBUNIT</scope>
    <scope>INTERACTION WITH GTF2H2</scope>
    <scope>DOMAIN</scope>
    <scope>MUTAGENESIS OF ARG-48 AND GLY-675</scope>
    <scope>CHARACTERIZATION OF VARIANTS TTD1 716-VAL--ARG-730 DEL AND TRP-722</scope>
</reference>
<reference key="12">
    <citation type="journal article" date="1999" name="Mol. Cell">
        <title>Reconstitution of the transcription factor TFIIH: assignment of functions for the three enzymatic subunits, XPB, XPD, and cdk7.</title>
        <authorList>
            <person name="Tirode F."/>
            <person name="Busso D."/>
            <person name="Coin F."/>
            <person name="Egly J.-M."/>
        </authorList>
    </citation>
    <scope>FUNCTION</scope>
    <scope>SUBUNIT</scope>
    <scope>MUTAGENESIS OF LYS-48</scope>
</reference>
<reference key="13">
    <citation type="journal article" date="2004" name="Mol. Cell">
        <title>Selective regulation of vitamin D receptor-responsive genes by TFIIH.</title>
        <authorList>
            <person name="Drane P."/>
            <person name="Compe E."/>
            <person name="Catez P."/>
            <person name="Chymkowitch P."/>
            <person name="Egly J.-M."/>
        </authorList>
    </citation>
    <scope>FUNCTION</scope>
    <scope>POSSIBLE PATHOLOGICAL MECHANISM OF VARIANT XP-D TRP-683</scope>
</reference>
<reference key="14">
    <citation type="journal article" date="2007" name="Mol. Cell">
        <title>Distinct roles for the XPB/p52 and XPD/p44 subcomplexes of TFIIH in damaged DNA opening during nucleotide excision repair.</title>
        <authorList>
            <person name="Coin F."/>
            <person name="Oksenych V."/>
            <person name="Egly J.M."/>
        </authorList>
    </citation>
    <scope>VARIANT TTD1 HIS-658</scope>
    <scope>VARIANT XP-D TRP-683</scope>
    <scope>VARIANT TTD1 TRP-722</scope>
    <scope>MUTAGENESIS OF LYS-48</scope>
</reference>
<reference key="15">
    <citation type="journal article" date="2006" name="Biochem. Biophys. Res. Commun.">
        <title>Identification and Herc5-mediated ISGylation of novel target proteins.</title>
        <authorList>
            <person name="Takeuchi T."/>
            <person name="Inoue S."/>
            <person name="Yokosawa H."/>
        </authorList>
    </citation>
    <scope>ISGYLATION</scope>
</reference>
<reference key="16">
    <citation type="journal article" date="2009" name="J. Biol. Chem.">
        <title>MCAF1/AM is involved in Sp1-mediated maintenance of cancer-associated telomerase activity.</title>
        <authorList>
            <person name="Liu L."/>
            <person name="Ishihara K."/>
            <person name="Ichimura T."/>
            <person name="Fujita N."/>
            <person name="Hino S."/>
            <person name="Tomita S."/>
            <person name="Watanabe S."/>
            <person name="Saitoh N."/>
            <person name="Ito T."/>
            <person name="Nakao M."/>
        </authorList>
    </citation>
    <scope>INTERACTION WITH ATF7IP</scope>
</reference>
<reference key="17">
    <citation type="journal article" date="2010" name="Mol. Cell">
        <title>MMXD, a TFIIH-independent XPD-MMS19 protein complex involved in chromosome segregation.</title>
        <authorList>
            <person name="Ito S."/>
            <person name="Tan L.J."/>
            <person name="Andoh D."/>
            <person name="Narita T."/>
            <person name="Seki M."/>
            <person name="Hirano Y."/>
            <person name="Narita K."/>
            <person name="Kuraoka I."/>
            <person name="Hiraoka Y."/>
            <person name="Tanaka K."/>
        </authorList>
    </citation>
    <scope>FUNCTION</scope>
    <scope>IDENTIFICATION IN MMXD COMPLEX</scope>
    <scope>INTERACTION WITH CIAO2B</scope>
    <scope>SUBCELLULAR LOCATION</scope>
</reference>
<reference key="18">
    <citation type="journal article" date="2011" name="BMC Syst. Biol.">
        <title>Initial characterization of the human central proteome.</title>
        <authorList>
            <person name="Burkard T.R."/>
            <person name="Planyavsky M."/>
            <person name="Kaupe I."/>
            <person name="Breitwieser F.P."/>
            <person name="Buerckstuemmer T."/>
            <person name="Bennett K.L."/>
            <person name="Superti-Furga G."/>
            <person name="Colinge J."/>
        </authorList>
    </citation>
    <scope>IDENTIFICATION BY MASS SPECTROMETRY [LARGE SCALE ANALYSIS]</scope>
</reference>
<reference key="19">
    <citation type="journal article" date="2012" name="Science">
        <title>MMS19 links cytoplasmic iron-sulfur cluster assembly to DNA metabolism.</title>
        <authorList>
            <person name="Gari K."/>
            <person name="Leon Ortiz A.M."/>
            <person name="Borel V."/>
            <person name="Flynn H."/>
            <person name="Skehel J.M."/>
            <person name="Boulton S.J."/>
        </authorList>
    </citation>
    <scope>IRON-SULFUR-BINDING</scope>
    <scope>COFACTOR</scope>
    <scope>MUTAGENESIS OF CYS-190</scope>
</reference>
<reference key="20">
    <citation type="journal article" date="2013" name="Curr. Biol.">
        <title>DNA quality control by a lesion sensor pocket of the xeroderma pigmentosum group D helicase subunit of TFIIH.</title>
        <authorList>
            <person name="Mathieu N."/>
            <person name="Kaczmarek N."/>
            <person name="Ruethemann P."/>
            <person name="Luch A."/>
            <person name="Naegeli H."/>
        </authorList>
    </citation>
    <scope>FUNCTION IN NUCLEOTIDE EXCISION REPAIR</scope>
    <scope>ASSOCIATION WITH DAMAGED DNA</scope>
    <scope>SUBCELLULAR LOCATION</scope>
    <scope>MUTAGENESIS OF LYS-48; TYR-192 AND ARG-196</scope>
</reference>
<reference key="21">
    <citation type="journal article" date="2013" name="Cell Metab.">
        <title>Human CIA2A-FAM96A and CIA2B-FAM96B integrate iron homeostasis and maturation of different subsets of cytosolic-nuclear iron-sulfur proteins.</title>
        <authorList>
            <person name="Stehling O."/>
            <person name="Mascarenhas J."/>
            <person name="Vashisht A.A."/>
            <person name="Sheftel A.D."/>
            <person name="Niggemeyer B."/>
            <person name="Roesser R."/>
            <person name="Pierik A.J."/>
            <person name="Wohlschlegel J.A."/>
            <person name="Lill R."/>
        </authorList>
    </citation>
    <scope>INTERACTION WITH CIAO1 AND CIAO2B</scope>
</reference>
<reference key="22">
    <citation type="journal article" date="2018" name="Cell Metab.">
        <title>Human CIA2A-FAM96A and CIA2B-FAM96B Integrate Iron Homeostasis and Maturation of Different Subsets of Cytosolic-Nuclear Iron-Sulfur Proteins.</title>
        <authorList>
            <person name="Stehling O."/>
            <person name="Mascarenhas J."/>
            <person name="Vashisht A.A."/>
            <person name="Sheftel A.D."/>
            <person name="Niggemeyer B."/>
            <person name="Roesser R."/>
            <person name="Pierik A.J."/>
            <person name="Wohlschlegel J.A."/>
            <person name="Lill R."/>
        </authorList>
    </citation>
    <scope>ERRATUM OF PUBMED:23891004</scope>
</reference>
<reference key="23">
    <citation type="journal article" date="2013" name="J. Biol. Chem.">
        <title>IOP1 protein is an external component of the human cytosolic iron-sulfur cluster assembly (CIA) machinery and functions in the MMS19 protein-dependent CIA pathway.</title>
        <authorList>
            <person name="Seki M."/>
            <person name="Takeda Y."/>
            <person name="Iwai K."/>
            <person name="Tanaka K."/>
        </authorList>
    </citation>
    <scope>SUBCELLULAR LOCATION</scope>
    <scope>INTERACTION WITH MMS19</scope>
</reference>
<reference evidence="42 43 44 45 46" key="24">
    <citation type="journal article" date="2016" name="Nature">
        <title>Near-atomic resolution visualization of human transcription promoter opening.</title>
        <authorList>
            <person name="He Y."/>
            <person name="Yan C."/>
            <person name="Fang J."/>
            <person name="Inouye C."/>
            <person name="Tjian R."/>
            <person name="Ivanov I."/>
            <person name="Nogales E."/>
        </authorList>
    </citation>
    <scope>STRUCTURE BY ELECTRON MICROSCOPY (3.90 ANGSTROMS) OF TRANSCRIPTION PRE-INITITATION COMPLEX</scope>
    <scope>SUBUNIT</scope>
</reference>
<reference evidence="47" key="25">
    <citation type="journal article" date="2019" name="Nat. Commun.">
        <title>Structural basis of TFIIH activation for nucleotide excision repair.</title>
        <authorList>
            <person name="Kokic G."/>
            <person name="Chernev A."/>
            <person name="Tegunov D."/>
            <person name="Dienemann C."/>
            <person name="Urlaub H."/>
            <person name="Cramer P."/>
        </authorList>
    </citation>
    <scope>STRUCTURE BY ELECTRON MICROSCOPY (3.50 ANGSTROMS) OF NUCLEOTIDE EXCISION REPAIR INTERMEDIATE IN COMPLEX WITH XPA; DNA SUBSTRATE AND IRON-SULFUR CENTER</scope>
    <scope>FUNCTION AS A 5'-3' HELICASE</scope>
    <scope>ACTIVITY REGULATION</scope>
    <scope>COFACTOR</scope>
    <scope>DNA-BINDING</scope>
    <scope>MUTAGENESIS OF LYS-48</scope>
</reference>
<reference evidence="48 49 50 51 52 53" key="26">
    <citation type="journal article" date="2021" name="Nature">
        <title>Structures of mammalian RNA polymerase II pre-initiation complexes.</title>
        <authorList>
            <person name="Aibara S."/>
            <person name="Schilbach S."/>
            <person name="Cramer P."/>
        </authorList>
    </citation>
    <scope>STRUCTURE BY ELECTRON MICROSCOPY (2.90 ANGSTROMS) OF PRE-INITIATION COMPLEXES WITH PIG POLYMERASE II</scope>
    <scope>FUNCTION</scope>
</reference>
<reference key="27">
    <citation type="journal article" date="1994" name="Hum. Mol. Genet.">
        <title>Structural and mutational analysis of the xeroderma pigmentosum group D (XPD) gene.</title>
        <authorList>
            <person name="Frederick G.D."/>
            <person name="Amirkhan R.H."/>
            <person name="Schultz R.A."/>
            <person name="Friedberg E.C."/>
        </authorList>
    </citation>
    <scope>VARIANT XP-D VAL-461</scope>
</reference>
<reference key="28">
    <citation type="journal article" date="1994" name="Nat. Genet.">
        <title>Mutations in the xeroderma pigmentosum group D DNA repair/transcription gene in patients with trichothiodystrophy.</title>
        <authorList>
            <person name="Broughton B.C."/>
            <person name="Steingrimsdottir H."/>
            <person name="Weber C.A."/>
            <person name="Lehmann A.R."/>
        </authorList>
    </citation>
    <scope>VARIANTS TTD1 HIS-112; PRO-616; TRP-722 AND 488-VAL--MET-493 DEL</scope>
</reference>
<reference key="29">
    <citation type="journal article" date="1995" name="Am. J. Hum. Genet.">
        <title>Molecular and cellular analysis of the DNA repair defect in a patient in xeroderma pigmentosum complementation group D who has the clinical features of xeroderma pigmentosum and Cockayne syndrome.</title>
        <authorList>
            <person name="Broughton B.C."/>
            <person name="Thompson A.F."/>
            <person name="Harcourt S.A."/>
            <person name="Vermeulen W."/>
            <person name="Hoeijmakers J.H.J."/>
            <person name="Botta E."/>
            <person name="Stefanini M."/>
            <person name="King M.D."/>
            <person name="Weber C.A."/>
            <person name="Cole J."/>
            <person name="Arlett C.F."/>
            <person name="Lehmann A.R."/>
        </authorList>
    </citation>
    <scope>VARIANT XP-D ARG-675</scope>
</reference>
<reference key="30">
    <citation type="journal article" date="1995" name="Cancer Res.">
        <title>Defects in the DNA repair and transcription gene ERCC2 in the cancer-prone disorder xeroderma pigmentosum group D.</title>
        <authorList>
            <person name="Takayama K."/>
            <person name="Salazar E.P."/>
            <person name="Lehmann A.R."/>
            <person name="Stefanini M."/>
            <person name="Thompson L.H."/>
            <person name="Weber C.A."/>
        </authorList>
    </citation>
    <scope>VARIANTS XP-D</scope>
</reference>
<reference key="31">
    <citation type="journal article" date="1996" name="Am. J. Hum. Genet.">
        <title>Defects in the DNA repair and transcription gene ERCC2(XPD) in trichothiodystrophy.</title>
        <authorList>
            <person name="Takayama K."/>
            <person name="Salazar E.P."/>
            <person name="Broughton B.C."/>
            <person name="Lehmann A.R."/>
            <person name="Sarasin A."/>
            <person name="Thompson L.H."/>
            <person name="Weber C.A."/>
        </authorList>
    </citation>
    <scope>VARIANTS TTD1 CYS-658 AND ARG-713</scope>
</reference>
<reference key="32">
    <citation type="journal article" date="1997" name="Hum. Mutat.">
        <title>Mutations in the XPD gene leading to Xeroderma pigmentosum symptoms.</title>
        <authorList>
            <person name="Kobayashi T."/>
            <person name="Kuraoka I."/>
            <person name="Saijo M."/>
            <person name="Nakatsu Y."/>
            <person name="Tanaka A."/>
            <person name="Someda Y."/>
            <person name="Fukuro S."/>
            <person name="Tanaka K."/>
        </authorList>
    </citation>
    <scope>VARIANTS XP-D</scope>
</reference>
<reference key="33">
    <citation type="journal article" date="1997" name="Hum. Mutat.">
        <title>DNA repair characteristics and mutations in the ERCC2 DNA repair and transcription gene in a trichothiodystrophy patient.</title>
        <authorList>
            <person name="Takayama K."/>
            <person name="Danks D.M."/>
            <person name="Salazar E.P."/>
            <person name="Cleaver J.E."/>
            <person name="Weber C.A."/>
        </authorList>
    </citation>
    <scope>VARIANTS TTD1 VAL-461; 716-VAL--ARG-730 DEL AND PRO-725</scope>
</reference>
<reference key="34">
    <citation type="journal article" date="1997" name="Proc. Natl. Acad. Sci. U.S.A.">
        <title>Xeroderma pigmentosum and trichothiodystrophy are associated with different mutations in the XPD (ERCC2) repair/transcription gene.</title>
        <authorList>
            <person name="Taylor E.M."/>
            <person name="Broughton B.C."/>
            <person name="Botta E."/>
            <person name="Stefanini M."/>
            <person name="Sarasin A."/>
            <person name="Jaspers N.G.J."/>
            <person name="Fawcett H."/>
            <person name="Harcourt S.A."/>
            <person name="Arlett C.F."/>
            <person name="Lehmann A.R."/>
        </authorList>
    </citation>
    <scope>VARIANTS TTD1/XP</scope>
    <scope>VARIANTS XP-D ARG-47; ASN-234; CYS-542 AND GLN-683</scope>
</reference>
<reference key="35">
    <citation type="journal article" date="1998" name="Am. J. Hum. Genet.">
        <title>Analysis of mutations in the XPD gene in Italian patients with trichothiodystrophy: site of mutation correlates with repair deficiency, but gene dosage appears to determine clinical severity.</title>
        <authorList>
            <person name="Botta E."/>
            <person name="Nardo T."/>
            <person name="Broughton B.C."/>
            <person name="Marinoni S."/>
            <person name="Lehmann A.R."/>
            <person name="Stefanini M."/>
        </authorList>
    </citation>
    <scope>VARIANTS TTD1 HIS-112; TYR-259; VAL-461; THR-482 DEL; GLY-673 AND TRP-722</scope>
</reference>
<reference key="36">
    <citation type="journal article" date="1999" name="Hum. Mutat.">
        <title>A summary of mutations in the UV-sensitive disorders: xeroderma pigmentosum, Cockayne syndrome, and trichothiodystrophy.</title>
        <authorList>
            <person name="Cleaver J.E."/>
            <person name="Thompson L.H."/>
            <person name="Richardson A.S."/>
            <person name="States J.C."/>
        </authorList>
    </citation>
    <scope>REVIEW ON VARIANTS XP-D</scope>
</reference>
<reference key="37">
    <citation type="journal article" date="2001" name="Am. J. Hum. Genet.">
        <title>Cerebro-oculo-facio-skeletal syndrome with a nucleotide excision-repair defect and a mutated XPD gene, with prenatal diagnosis in a triplet pregnancy.</title>
        <authorList>
            <person name="Graham J.M. Jr."/>
            <person name="Anyane-Yeboa K."/>
            <person name="Raams A."/>
            <person name="Appeldoorn E."/>
            <person name="Kleijer W.J."/>
            <person name="Garritsen V.H."/>
            <person name="Busch D."/>
            <person name="Edersheim T.G."/>
            <person name="Jaspers N.G.J."/>
        </authorList>
    </citation>
    <scope>VARIANTS COFS2 TRP-616 AND ASN-681</scope>
</reference>
<reference key="38">
    <citation type="journal article" date="2001" name="Cancer Epidemiol. Biomarkers Prev.">
        <title>Associations between ercc2 polymorphisms and gliomas.</title>
        <authorList>
            <person name="Caggana M."/>
            <person name="Kilgallen J."/>
            <person name="Conroy J.M."/>
            <person name="Wiencke J.K."/>
            <person name="Kelsey K.T."/>
            <person name="Miike R."/>
            <person name="Chen P."/>
            <person name="Wrensch M.R."/>
        </authorList>
    </citation>
    <scope>VARIANT CYS-616</scope>
</reference>
<reference key="39">
    <citation type="journal article" date="2001" name="Cancer Res.">
        <title>Modulation of nucleotide excision repair capacity by XPD polymorphisms in lung cancer patients.</title>
        <authorList>
            <person name="Spitz M.R."/>
            <person name="Wu X."/>
            <person name="Wang Y."/>
            <person name="Wang L.E."/>
            <person name="Shete S."/>
            <person name="Amos C.I."/>
            <person name="Guo Z."/>
            <person name="Lei L."/>
            <person name="Mohrenweiser H."/>
            <person name="Wei Q."/>
        </authorList>
    </citation>
    <scope>VARIANTS ASN-312 AND GLN-751</scope>
</reference>
<reference key="40">
    <citation type="journal article" date="2001" name="Carcinogenesis">
        <title>XPD exon 10 and 23 polymorphisms and DNA repair in human skin in situ.</title>
        <authorList>
            <person name="Hemminki K."/>
            <person name="Xu G."/>
            <person name="Angelini S."/>
            <person name="Snellman E."/>
            <person name="Jansen C.T."/>
            <person name="Lambert B."/>
            <person name="Hou S.M."/>
        </authorList>
    </citation>
    <scope>VARIANTS ASN-312 AND GLN-751</scope>
</reference>
<reference key="41">
    <citation type="journal article" date="2001" name="Genes Dev.">
        <title>The xeroderma pigmentosum group D (XPD) gene: one gene, two functions, three diseases.</title>
        <authorList>
            <person name="Lehmann A.R."/>
        </authorList>
    </citation>
    <scope>VARIANTS TTD1 GLY-487; PRO-592; PRO-594; GLY-658 AND ARG-663</scope>
    <scope>VARIANTS XP-D ALA-76; GLN-511; LEU-601 AND TRP-666</scope>
</reference>
<reference key="42">
    <citation type="journal article" date="2001" name="Hum. Mol. Genet.">
        <title>Two individuals with features of both xeroderma pigmentosum and trichothiodystrophy highlight the complexity of the clinical outcomes of mutations in the XPD gene.</title>
        <authorList>
            <person name="Broughton B.C."/>
            <person name="Berneburg M."/>
            <person name="Fawcett H."/>
            <person name="Taylor E.M."/>
            <person name="Arlett C.F."/>
            <person name="Nardo T."/>
            <person name="Stefanini M."/>
            <person name="Menefee E."/>
            <person name="Price V.H."/>
            <person name="Queille S."/>
            <person name="Sarasin A."/>
            <person name="Bohnert E."/>
            <person name="Krutmann J."/>
            <person name="Davidson R."/>
            <person name="Kraemer K.H."/>
            <person name="Lehmann A.R."/>
        </authorList>
    </citation>
    <scope>VARIANTS XP-D HIS-112; PRO-485 AND 582-GLU-LYS-583 DELINS VAL-SER-GLU</scope>
    <scope>VARIANTS ASN-312 AND GLN-751</scope>
</reference>
<reference key="43">
    <citation type="journal article" date="2001" name="Nat. Genet.">
        <title>A temperature-sensitive disorder in basal transcription and DNA repair in humans.</title>
        <authorList>
            <person name="Vermeulen W."/>
            <person name="Rademakers S."/>
            <person name="Jaspers N.G.J."/>
            <person name="Appeldoorn E."/>
            <person name="Raams A."/>
            <person name="Klein B."/>
            <person name="Kleijer W.J."/>
            <person name="Hansen L.K."/>
            <person name="Hoeijmakers J.H.J."/>
        </authorList>
    </citation>
    <scope>VARIANTS TTD1 CYS-658 AND ARG-713</scope>
</reference>
<accession>P18074</accession>
<accession>Q2TB78</accession>
<accession>Q2YDY2</accession>
<accession>Q7KZU6</accession>
<accession>Q8N721</accession>